<reference key="1">
    <citation type="journal article" date="1991" name="Biochim. Biophys. Acta">
        <title>Molecular cloning and sequence analysis of cDNAs for five major subunits of human proteasomes (multi-catalytic proteinase complexes).</title>
        <authorList>
            <person name="Tamura T."/>
            <person name="Lee D.H."/>
            <person name="Osaka F."/>
            <person name="Fujiwara T."/>
            <person name="Shin S."/>
            <person name="Chung C.H."/>
            <person name="Tanaka K."/>
            <person name="Ichihara A."/>
        </authorList>
    </citation>
    <scope>NUCLEOTIDE SEQUENCE [MRNA]</scope>
</reference>
<reference key="2">
    <citation type="submission" date="2004-10" db="EMBL/GenBank/DDBJ databases">
        <title>Cloning of human full-length CDSs in BD Creator(TM) system donor vector.</title>
        <authorList>
            <person name="Kalnine N."/>
            <person name="Chen X."/>
            <person name="Rolfs A."/>
            <person name="Halleck A."/>
            <person name="Hines L."/>
            <person name="Eisenstein S."/>
            <person name="Koundinya M."/>
            <person name="Raphael J."/>
            <person name="Moreira D."/>
            <person name="Kelley T."/>
            <person name="LaBaer J."/>
            <person name="Lin Y."/>
            <person name="Phelan M."/>
            <person name="Farmer A."/>
        </authorList>
    </citation>
    <scope>NUCLEOTIDE SEQUENCE [LARGE SCALE MRNA]</scope>
</reference>
<reference key="3">
    <citation type="journal article" date="2008" name="Nat. Methods">
        <title>Human protein factory for converting the transcriptome into an in vitro-expressed proteome.</title>
        <authorList>
            <person name="Goshima N."/>
            <person name="Kawamura Y."/>
            <person name="Fukumoto A."/>
            <person name="Miura A."/>
            <person name="Honma R."/>
            <person name="Satoh R."/>
            <person name="Wakamatsu A."/>
            <person name="Yamamoto J."/>
            <person name="Kimura K."/>
            <person name="Nishikawa T."/>
            <person name="Andoh T."/>
            <person name="Iida Y."/>
            <person name="Ishikawa K."/>
            <person name="Ito E."/>
            <person name="Kagawa N."/>
            <person name="Kaminaga C."/>
            <person name="Kanehori K."/>
            <person name="Kawakami B."/>
            <person name="Kenmochi K."/>
            <person name="Kimura R."/>
            <person name="Kobayashi M."/>
            <person name="Kuroita T."/>
            <person name="Kuwayama H."/>
            <person name="Maruyama Y."/>
            <person name="Matsuo K."/>
            <person name="Minami K."/>
            <person name="Mitsubori M."/>
            <person name="Mori M."/>
            <person name="Morishita R."/>
            <person name="Murase A."/>
            <person name="Nishikawa A."/>
            <person name="Nishikawa S."/>
            <person name="Okamoto T."/>
            <person name="Sakagami N."/>
            <person name="Sakamoto Y."/>
            <person name="Sasaki Y."/>
            <person name="Seki T."/>
            <person name="Sono S."/>
            <person name="Sugiyama A."/>
            <person name="Sumiya T."/>
            <person name="Takayama T."/>
            <person name="Takayama Y."/>
            <person name="Takeda H."/>
            <person name="Togashi T."/>
            <person name="Yahata K."/>
            <person name="Yamada H."/>
            <person name="Yanagisawa Y."/>
            <person name="Endo Y."/>
            <person name="Imamoto F."/>
            <person name="Kisu Y."/>
            <person name="Tanaka S."/>
            <person name="Isogai T."/>
            <person name="Imai J."/>
            <person name="Watanabe S."/>
            <person name="Nomura N."/>
        </authorList>
    </citation>
    <scope>NUCLEOTIDE SEQUENCE [LARGE SCALE MRNA]</scope>
</reference>
<reference key="4">
    <citation type="journal article" date="2003" name="Nature">
        <title>The DNA sequence and analysis of human chromosome 6.</title>
        <authorList>
            <person name="Mungall A.J."/>
            <person name="Palmer S.A."/>
            <person name="Sims S.K."/>
            <person name="Edwards C.A."/>
            <person name="Ashurst J.L."/>
            <person name="Wilming L."/>
            <person name="Jones M.C."/>
            <person name="Horton R."/>
            <person name="Hunt S.E."/>
            <person name="Scott C.E."/>
            <person name="Gilbert J.G.R."/>
            <person name="Clamp M.E."/>
            <person name="Bethel G."/>
            <person name="Milne S."/>
            <person name="Ainscough R."/>
            <person name="Almeida J.P."/>
            <person name="Ambrose K.D."/>
            <person name="Andrews T.D."/>
            <person name="Ashwell R.I.S."/>
            <person name="Babbage A.K."/>
            <person name="Bagguley C.L."/>
            <person name="Bailey J."/>
            <person name="Banerjee R."/>
            <person name="Barker D.J."/>
            <person name="Barlow K.F."/>
            <person name="Bates K."/>
            <person name="Beare D.M."/>
            <person name="Beasley H."/>
            <person name="Beasley O."/>
            <person name="Bird C.P."/>
            <person name="Blakey S.E."/>
            <person name="Bray-Allen S."/>
            <person name="Brook J."/>
            <person name="Brown A.J."/>
            <person name="Brown J.Y."/>
            <person name="Burford D.C."/>
            <person name="Burrill W."/>
            <person name="Burton J."/>
            <person name="Carder C."/>
            <person name="Carter N.P."/>
            <person name="Chapman J.C."/>
            <person name="Clark S.Y."/>
            <person name="Clark G."/>
            <person name="Clee C.M."/>
            <person name="Clegg S."/>
            <person name="Cobley V."/>
            <person name="Collier R.E."/>
            <person name="Collins J.E."/>
            <person name="Colman L.K."/>
            <person name="Corby N.R."/>
            <person name="Coville G.J."/>
            <person name="Culley K.M."/>
            <person name="Dhami P."/>
            <person name="Davies J."/>
            <person name="Dunn M."/>
            <person name="Earthrowl M.E."/>
            <person name="Ellington A.E."/>
            <person name="Evans K.A."/>
            <person name="Faulkner L."/>
            <person name="Francis M.D."/>
            <person name="Frankish A."/>
            <person name="Frankland J."/>
            <person name="French L."/>
            <person name="Garner P."/>
            <person name="Garnett J."/>
            <person name="Ghori M.J."/>
            <person name="Gilby L.M."/>
            <person name="Gillson C.J."/>
            <person name="Glithero R.J."/>
            <person name="Grafham D.V."/>
            <person name="Grant M."/>
            <person name="Gribble S."/>
            <person name="Griffiths C."/>
            <person name="Griffiths M.N.D."/>
            <person name="Hall R."/>
            <person name="Halls K.S."/>
            <person name="Hammond S."/>
            <person name="Harley J.L."/>
            <person name="Hart E.A."/>
            <person name="Heath P.D."/>
            <person name="Heathcott R."/>
            <person name="Holmes S.J."/>
            <person name="Howden P.J."/>
            <person name="Howe K.L."/>
            <person name="Howell G.R."/>
            <person name="Huckle E."/>
            <person name="Humphray S.J."/>
            <person name="Humphries M.D."/>
            <person name="Hunt A.R."/>
            <person name="Johnson C.M."/>
            <person name="Joy A.A."/>
            <person name="Kay M."/>
            <person name="Keenan S.J."/>
            <person name="Kimberley A.M."/>
            <person name="King A."/>
            <person name="Laird G.K."/>
            <person name="Langford C."/>
            <person name="Lawlor S."/>
            <person name="Leongamornlert D.A."/>
            <person name="Leversha M."/>
            <person name="Lloyd C.R."/>
            <person name="Lloyd D.M."/>
            <person name="Loveland J.E."/>
            <person name="Lovell J."/>
            <person name="Martin S."/>
            <person name="Mashreghi-Mohammadi M."/>
            <person name="Maslen G.L."/>
            <person name="Matthews L."/>
            <person name="McCann O.T."/>
            <person name="McLaren S.J."/>
            <person name="McLay K."/>
            <person name="McMurray A."/>
            <person name="Moore M.J.F."/>
            <person name="Mullikin J.C."/>
            <person name="Niblett D."/>
            <person name="Nickerson T."/>
            <person name="Novik K.L."/>
            <person name="Oliver K."/>
            <person name="Overton-Larty E.K."/>
            <person name="Parker A."/>
            <person name="Patel R."/>
            <person name="Pearce A.V."/>
            <person name="Peck A.I."/>
            <person name="Phillimore B.J.C.T."/>
            <person name="Phillips S."/>
            <person name="Plumb R.W."/>
            <person name="Porter K.M."/>
            <person name="Ramsey Y."/>
            <person name="Ranby S.A."/>
            <person name="Rice C.M."/>
            <person name="Ross M.T."/>
            <person name="Searle S.M."/>
            <person name="Sehra H.K."/>
            <person name="Sheridan E."/>
            <person name="Skuce C.D."/>
            <person name="Smith S."/>
            <person name="Smith M."/>
            <person name="Spraggon L."/>
            <person name="Squares S.L."/>
            <person name="Steward C.A."/>
            <person name="Sycamore N."/>
            <person name="Tamlyn-Hall G."/>
            <person name="Tester J."/>
            <person name="Theaker A.J."/>
            <person name="Thomas D.W."/>
            <person name="Thorpe A."/>
            <person name="Tracey A."/>
            <person name="Tromans A."/>
            <person name="Tubby B."/>
            <person name="Wall M."/>
            <person name="Wallis J.M."/>
            <person name="West A.P."/>
            <person name="White S.S."/>
            <person name="Whitehead S.L."/>
            <person name="Whittaker H."/>
            <person name="Wild A."/>
            <person name="Willey D.J."/>
            <person name="Wilmer T.E."/>
            <person name="Wood J.M."/>
            <person name="Wray P.W."/>
            <person name="Wyatt J.C."/>
            <person name="Young L."/>
            <person name="Younger R.M."/>
            <person name="Bentley D.R."/>
            <person name="Coulson A."/>
            <person name="Durbin R.M."/>
            <person name="Hubbard T."/>
            <person name="Sulston J.E."/>
            <person name="Dunham I."/>
            <person name="Rogers J."/>
            <person name="Beck S."/>
        </authorList>
    </citation>
    <scope>NUCLEOTIDE SEQUENCE [LARGE SCALE GENOMIC DNA]</scope>
</reference>
<reference key="5">
    <citation type="journal article" date="2004" name="Genome Res.">
        <title>The status, quality, and expansion of the NIH full-length cDNA project: the Mammalian Gene Collection (MGC).</title>
        <authorList>
            <consortium name="The MGC Project Team"/>
        </authorList>
    </citation>
    <scope>NUCLEOTIDE SEQUENCE [LARGE SCALE MRNA]</scope>
    <scope>VARIANT ALA-11</scope>
    <source>
        <tissue>Brain</tissue>
        <tissue>Lung</tissue>
    </source>
</reference>
<reference key="6">
    <citation type="journal article" date="1990" name="Biochim. Biophys. Acta">
        <title>Relationships among the subunits of the high molecular weight proteinase, macropain (proteasome).</title>
        <authorList>
            <person name="Lee L.W."/>
            <person name="Moomaw C.R."/>
            <person name="Orth K."/>
            <person name="McGuire M.J."/>
            <person name="DeMartino G.N."/>
            <person name="Slaughter C.A."/>
        </authorList>
    </citation>
    <scope>PROTEIN SEQUENCE OF 29-52</scope>
</reference>
<reference key="7">
    <citation type="journal article" date="1996" name="Nature">
        <title>A role for the proteasome regulator PA28alpha in antigen presentation.</title>
        <authorList>
            <person name="Groettrup M."/>
            <person name="Soza A."/>
            <person name="Eggers M."/>
            <person name="Kuehn L."/>
            <person name="Dick T.P."/>
            <person name="Schild H."/>
            <person name="Rammensee H.G."/>
            <person name="Koszinowski U.H."/>
            <person name="Kloetzel P.M."/>
        </authorList>
    </citation>
    <scope>FUNCTION IN ANTIGEN PRESENTATION</scope>
</reference>
<reference key="8">
    <citation type="journal article" date="2002" name="Mol. Biol. Cell">
        <title>Clastosome: a subtype of nuclear body enriched in 19S and 20S proteasomes, ubiquitin, and protein substrates of proteasome.</title>
        <authorList>
            <person name="Lafarga M."/>
            <person name="Berciano M.T."/>
            <person name="Pena E."/>
            <person name="Mayo I."/>
            <person name="Castano J.G."/>
            <person name="Bohmann D."/>
            <person name="Rodrigues J.P."/>
            <person name="Tavanez J.P."/>
            <person name="Carmo-Fonseca M."/>
        </authorList>
    </citation>
    <scope>SUBCELLULAR LOCATION</scope>
</reference>
<reference key="9">
    <citation type="journal article" date="2003" name="FEBS Lett.">
        <title>Human immunodeficiency virus-1 Tat protein interacts with distinct proteasomal alpha and beta subunits.</title>
        <authorList>
            <person name="Apcher G.S."/>
            <person name="Heink S."/>
            <person name="Zantopf D."/>
            <person name="Kloetzel P.-M."/>
            <person name="Schmid H.-P."/>
            <person name="Mayer R.J."/>
            <person name="Krueger E."/>
        </authorList>
    </citation>
    <scope>INTERACTION WITH HIV-1 TAT (MICROBIAL INFECTION)</scope>
</reference>
<reference key="10">
    <citation type="journal article" date="2004" name="Acta Biochim. Biophys. Sin.">
        <title>Interaction of plasminogen activator inhibitor-2 and proteasome subunit, beta type 1.</title>
        <authorList>
            <person name="Fan J."/>
            <person name="Zhang Y.Q."/>
            <person name="Li P."/>
            <person name="Hou M."/>
            <person name="Tan L."/>
            <person name="Wang X."/>
            <person name="Zhu Y.S."/>
        </authorList>
    </citation>
    <scope>INTERACTION WITH SERPINB2</scope>
</reference>
<reference key="11">
    <citation type="journal article" date="2004" name="Biomacromolecules">
        <title>20S proteasome prevents aggregation of heat-denatured proteins without PA700 regulatory subcomplex like a molecular chaperone.</title>
        <authorList>
            <person name="Yano M."/>
            <person name="Koumoto Y."/>
            <person name="Kanesaki Y."/>
            <person name="Wu X."/>
            <person name="Kido H."/>
        </authorList>
    </citation>
    <scope>FUNCTION</scope>
</reference>
<reference key="12">
    <citation type="journal article" date="2007" name="Biochemistry">
        <title>Mass spectrometric characterization of the affinity-purified human 26S proteasome complex.</title>
        <authorList>
            <person name="Wang X."/>
            <person name="Chen C.-F."/>
            <person name="Baker P.R."/>
            <person name="Chen P.-L."/>
            <person name="Kaiser P."/>
            <person name="Huang L."/>
        </authorList>
    </citation>
    <scope>IDENTIFICATION BY MASS SPECTROMETRY [LARGE SCALE ANALYSIS]</scope>
    <source>
        <tissue>Embryonic kidney</tissue>
    </source>
</reference>
<reference key="13">
    <citation type="journal article" date="2009" name="Science">
        <title>Lysine acetylation targets protein complexes and co-regulates major cellular functions.</title>
        <authorList>
            <person name="Choudhary C."/>
            <person name="Kumar C."/>
            <person name="Gnad F."/>
            <person name="Nielsen M.L."/>
            <person name="Rehman M."/>
            <person name="Walther T.C."/>
            <person name="Olsen J.V."/>
            <person name="Mann M."/>
        </authorList>
    </citation>
    <scope>ACETYLATION [LARGE SCALE ANALYSIS] AT LYS-204</scope>
    <scope>IDENTIFICATION BY MASS SPECTROMETRY [LARGE SCALE ANALYSIS]</scope>
</reference>
<reference key="14">
    <citation type="journal article" date="2011" name="BMC Syst. Biol.">
        <title>Initial characterization of the human central proteome.</title>
        <authorList>
            <person name="Burkard T.R."/>
            <person name="Planyavsky M."/>
            <person name="Kaupe I."/>
            <person name="Breitwieser F.P."/>
            <person name="Buerckstuemmer T."/>
            <person name="Bennett K.L."/>
            <person name="Superti-Furga G."/>
            <person name="Colinge J."/>
        </authorList>
    </citation>
    <scope>IDENTIFICATION BY MASS SPECTROMETRY [LARGE SCALE ANALYSIS]</scope>
</reference>
<reference key="15">
    <citation type="journal article" date="2012" name="Proc. Natl. Acad. Sci. U.S.A.">
        <title>N-terminal acetylome analyses and functional insights of the N-terminal acetyltransferase NatB.</title>
        <authorList>
            <person name="Van Damme P."/>
            <person name="Lasa M."/>
            <person name="Polevoda B."/>
            <person name="Gazquez C."/>
            <person name="Elosegui-Artola A."/>
            <person name="Kim D.S."/>
            <person name="De Juan-Pardo E."/>
            <person name="Demeyer K."/>
            <person name="Hole K."/>
            <person name="Larrea E."/>
            <person name="Timmerman E."/>
            <person name="Prieto J."/>
            <person name="Arnesen T."/>
            <person name="Sherman F."/>
            <person name="Gevaert K."/>
            <person name="Aldabe R."/>
        </authorList>
    </citation>
    <scope>ACETYLATION [LARGE SCALE ANALYSIS] AT MET-1</scope>
    <scope>IDENTIFICATION BY MASS SPECTROMETRY [LARGE SCALE ANALYSIS]</scope>
</reference>
<reference key="16">
    <citation type="journal article" date="2013" name="Annu. Rev. Biochem.">
        <title>Molecular architecture and assembly of the eukaryotic proteasome.</title>
        <authorList>
            <person name="Tomko R.J. Jr."/>
            <person name="Hochstrasser M."/>
        </authorList>
    </citation>
    <scope>NOMENCLATURE</scope>
</reference>
<reference key="17">
    <citation type="journal article" date="2013" name="J. Proteome Res.">
        <title>Toward a comprehensive characterization of a human cancer cell phosphoproteome.</title>
        <authorList>
            <person name="Zhou H."/>
            <person name="Di Palma S."/>
            <person name="Preisinger C."/>
            <person name="Peng M."/>
            <person name="Polat A.N."/>
            <person name="Heck A.J."/>
            <person name="Mohammed S."/>
        </authorList>
    </citation>
    <scope>PHOSPHORYLATION [LARGE SCALE ANALYSIS] AT SER-62; SER-68 AND SER-162</scope>
    <scope>IDENTIFICATION BY MASS SPECTROMETRY [LARGE SCALE ANALYSIS]</scope>
    <source>
        <tissue>Cervix carcinoma</tissue>
        <tissue>Erythroleukemia</tissue>
    </source>
</reference>
<reference key="18">
    <citation type="journal article" date="2015" name="Proteomics">
        <title>N-terminome analysis of the human mitochondrial proteome.</title>
        <authorList>
            <person name="Vaca Jacome A.S."/>
            <person name="Rabilloud T."/>
            <person name="Schaeffer-Reiss C."/>
            <person name="Rompais M."/>
            <person name="Ayoub D."/>
            <person name="Lane L."/>
            <person name="Bairoch A."/>
            <person name="Van Dorsselaer A."/>
            <person name="Carapito C."/>
        </authorList>
    </citation>
    <scope>IDENTIFICATION BY MASS SPECTROMETRY [LARGE SCALE ANALYSIS]</scope>
</reference>
<reference key="19">
    <citation type="journal article" date="2016" name="Biol. Chem.">
        <title>Human 20S proteasome activity towards fluorogenic peptides of various chain lengths.</title>
        <authorList>
            <person name="Rut W."/>
            <person name="Drag M."/>
        </authorList>
    </citation>
    <scope>FUNCTION</scope>
</reference>
<reference key="20">
    <citation type="journal article" date="2015" name="Nat. Commun.">
        <title>Cryo-EM reveals the conformation of a substrate analogue in the human 20S proteasome core.</title>
        <authorList>
            <person name="da Fonseca P.C."/>
            <person name="Morris E.P."/>
        </authorList>
    </citation>
    <scope>STRUCTURE BY ELECTRON MICROSCOPY (3.50 ANGSTROMS) OF 35-239</scope>
    <scope>SUBUNIT</scope>
</reference>
<reference key="21">
    <citation type="journal article" date="2015" name="Structure">
        <title>Crystal structure of the human 20S proteasome in complex with carfilzomib.</title>
        <authorList>
            <person name="Harshbarger W."/>
            <person name="Miller C."/>
            <person name="Diedrich C."/>
            <person name="Sacchettini J."/>
        </authorList>
    </citation>
    <scope>X-RAY CRYSTALLOGRAPHY (2.60 ANGSTROMS) OF 35-236</scope>
    <scope>SUBUNIT</scope>
</reference>
<reference key="22">
    <citation type="journal article" date="2016" name="Nat. Struct. Mol. Biol.">
        <title>An atomic structure of the human 26S proteasome.</title>
        <authorList>
            <person name="Huang X."/>
            <person name="Luan B."/>
            <person name="Wu J."/>
            <person name="Shi Y."/>
        </authorList>
    </citation>
    <scope>STRUCTURE BY ELECTRON MICROSCOPY (3.50 ANGSTROMS)</scope>
    <scope>SUBUNIT</scope>
</reference>
<reference key="23">
    <citation type="journal article" date="2016" name="Proc. Natl. Acad. Sci. U.S.A.">
        <title>Structure of the human 26S proteasome at a resolution of 3.9 Aa.</title>
        <authorList>
            <person name="Schweitzer A."/>
            <person name="Aufderheide A."/>
            <person name="Rudack T."/>
            <person name="Beck F."/>
            <person name="Pfeifer G."/>
            <person name="Plitzko J.M."/>
            <person name="Sakata E."/>
            <person name="Schulten K."/>
            <person name="Foerster F."/>
            <person name="Baumeister W."/>
        </authorList>
    </citation>
    <scope>STRUCTURE BY ELECTRON MICROSCOPY (4.02 ANGSTROMS)</scope>
    <scope>SUBUNIT</scope>
</reference>
<reference key="24">
    <citation type="journal article" date="2016" name="Science">
        <title>The inhibition mechanism of human 20S proteasomes enables next-generation inhibitor design.</title>
        <authorList>
            <person name="Schrader J."/>
            <person name="Henneberg F."/>
            <person name="Mata R.A."/>
            <person name="Tittmann K."/>
            <person name="Schneider T.R."/>
            <person name="Stark H."/>
            <person name="Bourenkov G."/>
            <person name="Chari A."/>
        </authorList>
    </citation>
    <scope>X-RAY CRYSTALLOGRAPHY (1.80 ANGSTROMS) OF 35-239</scope>
    <scope>SUBUNIT</scope>
</reference>
<reference key="25">
    <citation type="journal article" date="2021" name="Nature">
        <title>AKIRIN2 controls the nuclear import of proteasomes in vertebrates.</title>
        <authorList>
            <person name="de Almeida M."/>
            <person name="Hinterndorfer M."/>
            <person name="Brunner H."/>
            <person name="Grishkovskaya I."/>
            <person name="Singh K."/>
            <person name="Schleiffer A."/>
            <person name="Jude J."/>
            <person name="Deswal S."/>
            <person name="Kalis R."/>
            <person name="Vunjak M."/>
            <person name="Lendl T."/>
            <person name="Imre R."/>
            <person name="Roitinger E."/>
            <person name="Neumann T."/>
            <person name="Kandolf S."/>
            <person name="Schutzbier M."/>
            <person name="Mechtler K."/>
            <person name="Versteeg G.A."/>
            <person name="Haselbach D."/>
            <person name="Zuber J."/>
        </authorList>
    </citation>
    <scope>STRUCTURE BY ELECTRON MICROSCOPY (2.80 ANGSTROMS) IN COMPLEX WITH AKIRIN2</scope>
    <scope>SUBUNIT</scope>
    <scope>SUBCELLULAR LOCATION</scope>
</reference>
<reference key="26">
    <citation type="journal article" date="2020" name="Hum. Mol. Genet.">
        <title>Biallelic variants in PSMB1 encoding the proteasome subunit beta6 cause impairment of proteasome function, microcephaly, intellectual disability, developmental delay and short stature.</title>
        <authorList>
            <person name="Ansar M."/>
            <person name="Ebstein F."/>
            <person name="Oezkoc H."/>
            <person name="Paracha S.A."/>
            <person name="Iwaszkiewicz J."/>
            <person name="Gesemann M."/>
            <person name="Zoete V."/>
            <person name="Ranza E."/>
            <person name="Santoni F.A."/>
            <person name="Sarwar M.T."/>
            <person name="Ahmed J."/>
            <person name="Krueger E."/>
            <person name="Bachmann-Gagescu R."/>
            <person name="Antonarakis S.E."/>
        </authorList>
    </citation>
    <scope>VARIANT NEDMHAL HIS-103</scope>
    <scope>INVOLVEMENT IN NEDMHAL</scope>
    <scope>CHARACTERIZATION OF VARIANT NEDMHAL HIS-103</scope>
</reference>
<evidence type="ECO:0000250" key="1"/>
<evidence type="ECO:0000250" key="2">
    <source>
        <dbReference type="UniProtKB" id="O09061"/>
    </source>
</evidence>
<evidence type="ECO:0000255" key="3">
    <source>
        <dbReference type="PROSITE-ProRule" id="PRU00809"/>
    </source>
</evidence>
<evidence type="ECO:0000269" key="4">
    <source>
    </source>
</evidence>
<evidence type="ECO:0000269" key="5">
    <source>
    </source>
</evidence>
<evidence type="ECO:0000269" key="6">
    <source>
    </source>
</evidence>
<evidence type="ECO:0000269" key="7">
    <source>
    </source>
</evidence>
<evidence type="ECO:0000269" key="8">
    <source>
    </source>
</evidence>
<evidence type="ECO:0000269" key="9">
    <source>
    </source>
</evidence>
<evidence type="ECO:0000269" key="10">
    <source>
    </source>
</evidence>
<evidence type="ECO:0000269" key="11">
    <source>
    </source>
</evidence>
<evidence type="ECO:0000269" key="12">
    <source>
    </source>
</evidence>
<evidence type="ECO:0000269" key="13">
    <source>
    </source>
</evidence>
<evidence type="ECO:0000269" key="14">
    <source>
    </source>
</evidence>
<evidence type="ECO:0000269" key="15">
    <source>
    </source>
</evidence>
<evidence type="ECO:0000269" key="16">
    <source>
    </source>
</evidence>
<evidence type="ECO:0000269" key="17">
    <source>
    </source>
</evidence>
<evidence type="ECO:0000269" key="18">
    <source>
    </source>
</evidence>
<evidence type="ECO:0000303" key="19">
    <source>
    </source>
</evidence>
<evidence type="ECO:0000305" key="20"/>
<evidence type="ECO:0000312" key="21">
    <source>
        <dbReference type="HGNC" id="HGNC:9537"/>
    </source>
</evidence>
<evidence type="ECO:0007744" key="22">
    <source>
    </source>
</evidence>
<evidence type="ECO:0007744" key="23">
    <source>
    </source>
</evidence>
<evidence type="ECO:0007744" key="24">
    <source>
    </source>
</evidence>
<evidence type="ECO:0007829" key="25">
    <source>
        <dbReference type="PDB" id="4R3O"/>
    </source>
</evidence>
<evidence type="ECO:0007829" key="26">
    <source>
        <dbReference type="PDB" id="5LE5"/>
    </source>
</evidence>
<evidence type="ECO:0007829" key="27">
    <source>
        <dbReference type="PDB" id="8CVS"/>
    </source>
</evidence>
<evidence type="ECO:0007829" key="28">
    <source>
        <dbReference type="PDB" id="8QZ9"/>
    </source>
</evidence>
<feature type="propeptide" id="PRO_0000259623" evidence="9">
    <location>
        <begin position="1"/>
        <end position="28"/>
    </location>
</feature>
<feature type="chain" id="PRO_0000148030" description="Proteasome subunit beta type-1">
    <location>
        <begin position="29"/>
        <end position="241"/>
    </location>
</feature>
<feature type="modified residue" description="N-acetylmethionine" evidence="23">
    <location>
        <position position="1"/>
    </location>
</feature>
<feature type="modified residue" description="Phosphoserine" evidence="24">
    <location>
        <position position="62"/>
    </location>
</feature>
<feature type="modified residue" description="Phosphoserine" evidence="24">
    <location>
        <position position="68"/>
    </location>
</feature>
<feature type="modified residue" description="Phosphotyrosine" evidence="2">
    <location>
        <position position="150"/>
    </location>
</feature>
<feature type="modified residue" description="Phosphoserine" evidence="24">
    <location>
        <position position="162"/>
    </location>
</feature>
<feature type="modified residue" description="N6-acetyllysine" evidence="22">
    <location>
        <position position="204"/>
    </location>
</feature>
<feature type="glycosylation site" description="O-linked (GlcNAc) serine" evidence="1">
    <location>
        <position position="58"/>
    </location>
</feature>
<feature type="glycosylation site" description="O-linked (GlcNAc) serine" evidence="1">
    <location>
        <position position="209"/>
    </location>
</feature>
<feature type="sequence variant" id="VAR_051547" description="In dbSNP:rs12717." evidence="8">
    <original>P</original>
    <variation>A</variation>
    <location>
        <position position="11"/>
    </location>
</feature>
<feature type="sequence variant" id="VAR_087692" description="In NEDMHAL; uncertain significance; results in impaired proteasome assembly." evidence="16">
    <original>Y</original>
    <variation>H</variation>
    <location>
        <position position="103"/>
    </location>
</feature>
<feature type="sequence variant" id="VAR_051548" description="In dbSNP:rs10541.">
    <original>I</original>
    <variation>N</variation>
    <location>
        <position position="208"/>
    </location>
</feature>
<feature type="strand" evidence="26">
    <location>
        <begin position="39"/>
        <end position="44"/>
    </location>
</feature>
<feature type="strand" evidence="26">
    <location>
        <begin position="49"/>
        <end position="54"/>
    </location>
</feature>
<feature type="strand" evidence="26">
    <location>
        <begin position="57"/>
        <end position="59"/>
    </location>
</feature>
<feature type="strand" evidence="26">
    <location>
        <begin position="62"/>
        <end position="66"/>
    </location>
</feature>
<feature type="strand" evidence="26">
    <location>
        <begin position="71"/>
        <end position="75"/>
    </location>
</feature>
<feature type="strand" evidence="26">
    <location>
        <begin position="78"/>
        <end position="84"/>
    </location>
</feature>
<feature type="helix" evidence="26">
    <location>
        <begin position="86"/>
        <end position="107"/>
    </location>
</feature>
<feature type="helix" evidence="26">
    <location>
        <begin position="113"/>
        <end position="126"/>
    </location>
</feature>
<feature type="turn" evidence="26">
    <location>
        <begin position="127"/>
        <end position="129"/>
    </location>
</feature>
<feature type="strand" evidence="26">
    <location>
        <begin position="134"/>
        <end position="141"/>
    </location>
</feature>
<feature type="strand" evidence="28">
    <location>
        <begin position="143"/>
        <end position="145"/>
    </location>
</feature>
<feature type="strand" evidence="26">
    <location>
        <begin position="147"/>
        <end position="152"/>
    </location>
</feature>
<feature type="strand" evidence="27">
    <location>
        <begin position="154"/>
        <end position="156"/>
    </location>
</feature>
<feature type="strand" evidence="26">
    <location>
        <begin position="158"/>
        <end position="167"/>
    </location>
</feature>
<feature type="helix" evidence="26">
    <location>
        <begin position="170"/>
        <end position="180"/>
    </location>
</feature>
<feature type="helix" evidence="26">
    <location>
        <begin position="196"/>
        <end position="213"/>
    </location>
</feature>
<feature type="strand" evidence="25">
    <location>
        <begin position="214"/>
        <end position="217"/>
    </location>
</feature>
<feature type="strand" evidence="26">
    <location>
        <begin position="219"/>
        <end position="227"/>
    </location>
</feature>
<feature type="strand" evidence="26">
    <location>
        <begin position="230"/>
        <end position="237"/>
    </location>
</feature>
<dbReference type="EMBL" id="D00761">
    <property type="protein sequence ID" value="BAA00658.1"/>
    <property type="molecule type" value="mRNA"/>
</dbReference>
<dbReference type="EMBL" id="BT019720">
    <property type="protein sequence ID" value="AAV38525.1"/>
    <property type="molecule type" value="mRNA"/>
</dbReference>
<dbReference type="EMBL" id="AB451312">
    <property type="protein sequence ID" value="BAG70126.1"/>
    <property type="molecule type" value="mRNA"/>
</dbReference>
<dbReference type="EMBL" id="AB451442">
    <property type="protein sequence ID" value="BAG70256.1"/>
    <property type="molecule type" value="mRNA"/>
</dbReference>
<dbReference type="EMBL" id="AL031259">
    <property type="status" value="NOT_ANNOTATED_CDS"/>
    <property type="molecule type" value="Genomic_DNA"/>
</dbReference>
<dbReference type="EMBL" id="BC000508">
    <property type="protein sequence ID" value="AAH00508.1"/>
    <property type="molecule type" value="mRNA"/>
</dbReference>
<dbReference type="EMBL" id="BC020807">
    <property type="protein sequence ID" value="AAH20807.1"/>
    <property type="molecule type" value="mRNA"/>
</dbReference>
<dbReference type="CCDS" id="CCDS34577.1"/>
<dbReference type="PIR" id="S15973">
    <property type="entry name" value="SNHUC5"/>
</dbReference>
<dbReference type="RefSeq" id="NP_002784.1">
    <property type="nucleotide sequence ID" value="NM_002793.4"/>
</dbReference>
<dbReference type="PDB" id="4R3O">
    <property type="method" value="X-ray"/>
    <property type="resolution" value="2.60 A"/>
    <property type="chains" value="1/M=29-241"/>
</dbReference>
<dbReference type="PDB" id="4R67">
    <property type="method" value="X-ray"/>
    <property type="resolution" value="2.89 A"/>
    <property type="chains" value="1/M/a/o=29-241"/>
</dbReference>
<dbReference type="PDB" id="5A0Q">
    <property type="method" value="EM"/>
    <property type="resolution" value="3.50 A"/>
    <property type="chains" value="M/a=29-241"/>
</dbReference>
<dbReference type="PDB" id="5GJQ">
    <property type="method" value="EM"/>
    <property type="resolution" value="4.50 A"/>
    <property type="chains" value="f/t=1-241"/>
</dbReference>
<dbReference type="PDB" id="5GJR">
    <property type="method" value="EM"/>
    <property type="resolution" value="3.50 A"/>
    <property type="chains" value="f/t=1-241"/>
</dbReference>
<dbReference type="PDB" id="5L4G">
    <property type="method" value="EM"/>
    <property type="resolution" value="4.02 A"/>
    <property type="chains" value="1/U=1-241"/>
</dbReference>
<dbReference type="PDB" id="5L5B">
    <property type="method" value="X-ray"/>
    <property type="resolution" value="2.80 A"/>
    <property type="chains" value="L/Z=124-138, L/Z=145-160"/>
</dbReference>
<dbReference type="PDB" id="5L5D">
    <property type="method" value="X-ray"/>
    <property type="resolution" value="2.80 A"/>
    <property type="chains" value="L/Z=124-138, L/Z=145-160"/>
</dbReference>
<dbReference type="PDB" id="5L5E">
    <property type="method" value="X-ray"/>
    <property type="resolution" value="2.90 A"/>
    <property type="chains" value="L/Z=124-138, L/Z=145-160"/>
</dbReference>
<dbReference type="PDB" id="5L5F">
    <property type="method" value="X-ray"/>
    <property type="resolution" value="2.50 A"/>
    <property type="chains" value="L/Z=124-138, L/Z=145-160"/>
</dbReference>
<dbReference type="PDB" id="5L5H">
    <property type="method" value="X-ray"/>
    <property type="resolution" value="2.60 A"/>
    <property type="chains" value="L/Z=124-138, L/Z=145-160"/>
</dbReference>
<dbReference type="PDB" id="5L5I">
    <property type="method" value="X-ray"/>
    <property type="resolution" value="2.90 A"/>
    <property type="chains" value="L/Z=124-138, L/Z=145-160"/>
</dbReference>
<dbReference type="PDB" id="5L5J">
    <property type="method" value="X-ray"/>
    <property type="resolution" value="2.90 A"/>
    <property type="chains" value="L/Z=124-138, L/Z=145-160"/>
</dbReference>
<dbReference type="PDB" id="5L5O">
    <property type="method" value="X-ray"/>
    <property type="resolution" value="2.60 A"/>
    <property type="chains" value="L/Z=124-138, L/Z=145-160"/>
</dbReference>
<dbReference type="PDB" id="5L5P">
    <property type="method" value="X-ray"/>
    <property type="resolution" value="2.80 A"/>
    <property type="chains" value="L/Z=124-138, L/Z=145-160"/>
</dbReference>
<dbReference type="PDB" id="5L5Q">
    <property type="method" value="X-ray"/>
    <property type="resolution" value="2.80 A"/>
    <property type="chains" value="L/Z=124-138, L/Z=145-160"/>
</dbReference>
<dbReference type="PDB" id="5L5R">
    <property type="method" value="X-ray"/>
    <property type="resolution" value="2.90 A"/>
    <property type="chains" value="L/Z=124-138, L/Z=145-160"/>
</dbReference>
<dbReference type="PDB" id="5L5S">
    <property type="method" value="X-ray"/>
    <property type="resolution" value="2.60 A"/>
    <property type="chains" value="L/Z=124-138, L/Z=145-160"/>
</dbReference>
<dbReference type="PDB" id="5L5T">
    <property type="method" value="X-ray"/>
    <property type="resolution" value="2.90 A"/>
    <property type="chains" value="L/Z=124-138, L/Z=145-160"/>
</dbReference>
<dbReference type="PDB" id="5L5U">
    <property type="method" value="X-ray"/>
    <property type="resolution" value="2.60 A"/>
    <property type="chains" value="L/Z=124-138, L/Z=145-160"/>
</dbReference>
<dbReference type="PDB" id="5L5V">
    <property type="method" value="X-ray"/>
    <property type="resolution" value="2.70 A"/>
    <property type="chains" value="L/Z=124-138, L/Z=145-160"/>
</dbReference>
<dbReference type="PDB" id="5L5W">
    <property type="method" value="X-ray"/>
    <property type="resolution" value="2.80 A"/>
    <property type="chains" value="L/Z=124-138, L/Z=145-160"/>
</dbReference>
<dbReference type="PDB" id="5L5X">
    <property type="method" value="X-ray"/>
    <property type="resolution" value="2.90 A"/>
    <property type="chains" value="L/Z=124-138, L/Z=145-160"/>
</dbReference>
<dbReference type="PDB" id="5L5Y">
    <property type="method" value="X-ray"/>
    <property type="resolution" value="2.70 A"/>
    <property type="chains" value="L/Z=124-138, L/Z=145-160"/>
</dbReference>
<dbReference type="PDB" id="5L5Z">
    <property type="method" value="X-ray"/>
    <property type="resolution" value="2.70 A"/>
    <property type="chains" value="L/Z=124-138, L/Z=145-160"/>
</dbReference>
<dbReference type="PDB" id="5L60">
    <property type="method" value="X-ray"/>
    <property type="resolution" value="2.70 A"/>
    <property type="chains" value="L/Z=124-138, L/Z=145-160"/>
</dbReference>
<dbReference type="PDB" id="5L61">
    <property type="method" value="X-ray"/>
    <property type="resolution" value="2.80 A"/>
    <property type="chains" value="L/Z=124-138, L/Z=145-160"/>
</dbReference>
<dbReference type="PDB" id="5L62">
    <property type="method" value="X-ray"/>
    <property type="resolution" value="2.80 A"/>
    <property type="chains" value="L/Z=124-138, L/Z=145-160"/>
</dbReference>
<dbReference type="PDB" id="5L63">
    <property type="method" value="X-ray"/>
    <property type="resolution" value="2.70 A"/>
    <property type="chains" value="L/Z=124-138, L/Z=145-160"/>
</dbReference>
<dbReference type="PDB" id="5L64">
    <property type="method" value="X-ray"/>
    <property type="resolution" value="2.70 A"/>
    <property type="chains" value="L/Z=124-138, L/Z=145-160"/>
</dbReference>
<dbReference type="PDB" id="5LE5">
    <property type="method" value="X-ray"/>
    <property type="resolution" value="1.80 A"/>
    <property type="chains" value="L/Z=29-241"/>
</dbReference>
<dbReference type="PDB" id="5LEX">
    <property type="method" value="X-ray"/>
    <property type="resolution" value="2.20 A"/>
    <property type="chains" value="L/Z=29-241"/>
</dbReference>
<dbReference type="PDB" id="5LEY">
    <property type="method" value="X-ray"/>
    <property type="resolution" value="1.90 A"/>
    <property type="chains" value="L/Z=29-241"/>
</dbReference>
<dbReference type="PDB" id="5LEZ">
    <property type="method" value="X-ray"/>
    <property type="resolution" value="2.19 A"/>
    <property type="chains" value="L/Z=29-241"/>
</dbReference>
<dbReference type="PDB" id="5LF0">
    <property type="method" value="X-ray"/>
    <property type="resolution" value="2.41 A"/>
    <property type="chains" value="L/Z=29-241"/>
</dbReference>
<dbReference type="PDB" id="5LF1">
    <property type="method" value="X-ray"/>
    <property type="resolution" value="2.00 A"/>
    <property type="chains" value="L/Z=29-241"/>
</dbReference>
<dbReference type="PDB" id="5LF3">
    <property type="method" value="X-ray"/>
    <property type="resolution" value="2.10 A"/>
    <property type="chains" value="L/Z=29-241"/>
</dbReference>
<dbReference type="PDB" id="5LF4">
    <property type="method" value="X-ray"/>
    <property type="resolution" value="1.99 A"/>
    <property type="chains" value="L/Z=29-241"/>
</dbReference>
<dbReference type="PDB" id="5LF6">
    <property type="method" value="X-ray"/>
    <property type="resolution" value="2.07 A"/>
    <property type="chains" value="L/Z=29-241"/>
</dbReference>
<dbReference type="PDB" id="5LF7">
    <property type="method" value="X-ray"/>
    <property type="resolution" value="2.00 A"/>
    <property type="chains" value="L/Z=29-241"/>
</dbReference>
<dbReference type="PDB" id="5LN3">
    <property type="method" value="EM"/>
    <property type="resolution" value="6.80 A"/>
    <property type="chains" value="6=1-241"/>
</dbReference>
<dbReference type="PDB" id="5M2B">
    <property type="method" value="X-ray"/>
    <property type="resolution" value="2.70 A"/>
    <property type="chains" value="L/Z=124-138, L/Z=145-160"/>
</dbReference>
<dbReference type="PDB" id="5M32">
    <property type="method" value="EM"/>
    <property type="resolution" value="3.80 A"/>
    <property type="chains" value="L/Z=1-241"/>
</dbReference>
<dbReference type="PDB" id="5T0C">
    <property type="method" value="EM"/>
    <property type="resolution" value="3.80 A"/>
    <property type="chains" value="AS/BS=2-241"/>
</dbReference>
<dbReference type="PDB" id="5T0G">
    <property type="method" value="EM"/>
    <property type="resolution" value="4.40 A"/>
    <property type="chains" value="S=2-241"/>
</dbReference>
<dbReference type="PDB" id="5T0H">
    <property type="method" value="EM"/>
    <property type="resolution" value="6.80 A"/>
    <property type="chains" value="S=2-241"/>
</dbReference>
<dbReference type="PDB" id="5T0I">
    <property type="method" value="EM"/>
    <property type="resolution" value="8.00 A"/>
    <property type="chains" value="S=2-241"/>
</dbReference>
<dbReference type="PDB" id="5T0J">
    <property type="method" value="EM"/>
    <property type="resolution" value="8.00 A"/>
    <property type="chains" value="S=2-241"/>
</dbReference>
<dbReference type="PDB" id="5VFO">
    <property type="method" value="EM"/>
    <property type="resolution" value="3.50 A"/>
    <property type="chains" value="S/s=29-241"/>
</dbReference>
<dbReference type="PDB" id="5VFP">
    <property type="method" value="EM"/>
    <property type="resolution" value="4.20 A"/>
    <property type="chains" value="S/s=29-241"/>
</dbReference>
<dbReference type="PDB" id="5VFQ">
    <property type="method" value="EM"/>
    <property type="resolution" value="4.20 A"/>
    <property type="chains" value="S/s=29-241"/>
</dbReference>
<dbReference type="PDB" id="5VFR">
    <property type="method" value="EM"/>
    <property type="resolution" value="4.90 A"/>
    <property type="chains" value="S/s=29-241"/>
</dbReference>
<dbReference type="PDB" id="5VFS">
    <property type="method" value="EM"/>
    <property type="resolution" value="3.60 A"/>
    <property type="chains" value="S/s=29-241"/>
</dbReference>
<dbReference type="PDB" id="5VFT">
    <property type="method" value="EM"/>
    <property type="resolution" value="7.00 A"/>
    <property type="chains" value="S/s=29-241"/>
</dbReference>
<dbReference type="PDB" id="5VFU">
    <property type="method" value="EM"/>
    <property type="resolution" value="5.80 A"/>
    <property type="chains" value="S/s=29-241"/>
</dbReference>
<dbReference type="PDB" id="6AVO">
    <property type="method" value="EM"/>
    <property type="resolution" value="3.80 A"/>
    <property type="chains" value="S/X=29-241"/>
</dbReference>
<dbReference type="PDB" id="6E5B">
    <property type="method" value="X-ray"/>
    <property type="resolution" value="2.77 A"/>
    <property type="chains" value="L/Z=1-241"/>
</dbReference>
<dbReference type="PDB" id="6KWY">
    <property type="method" value="EM"/>
    <property type="resolution" value="2.72 A"/>
    <property type="chains" value="L/Z=1-241"/>
</dbReference>
<dbReference type="PDB" id="6MSB">
    <property type="method" value="EM"/>
    <property type="resolution" value="3.00 A"/>
    <property type="chains" value="S/s=2-241"/>
</dbReference>
<dbReference type="PDB" id="6MSD">
    <property type="method" value="EM"/>
    <property type="resolution" value="3.20 A"/>
    <property type="chains" value="S/s=2-241"/>
</dbReference>
<dbReference type="PDB" id="6MSE">
    <property type="method" value="EM"/>
    <property type="resolution" value="3.30 A"/>
    <property type="chains" value="A=151-231"/>
</dbReference>
<dbReference type="PDB" id="6MSG">
    <property type="method" value="EM"/>
    <property type="resolution" value="3.50 A"/>
    <property type="chains" value="S/s=2-241"/>
</dbReference>
<dbReference type="PDB" id="6MSH">
    <property type="method" value="EM"/>
    <property type="resolution" value="3.60 A"/>
    <property type="chains" value="S/s=2-241"/>
</dbReference>
<dbReference type="PDB" id="6MSJ">
    <property type="method" value="EM"/>
    <property type="resolution" value="3.30 A"/>
    <property type="chains" value="S/s=2-241"/>
</dbReference>
<dbReference type="PDB" id="6MSK">
    <property type="method" value="EM"/>
    <property type="resolution" value="3.20 A"/>
    <property type="chains" value="S/s=2-241"/>
</dbReference>
<dbReference type="PDB" id="6R70">
    <property type="method" value="EM"/>
    <property type="resolution" value="3.50 A"/>
    <property type="chains" value="L/Z=29-241"/>
</dbReference>
<dbReference type="PDB" id="6REY">
    <property type="method" value="EM"/>
    <property type="resolution" value="3.00 A"/>
    <property type="chains" value="M/a=29-241"/>
</dbReference>
<dbReference type="PDB" id="6RGQ">
    <property type="method" value="EM"/>
    <property type="resolution" value="2.60 A"/>
    <property type="chains" value="M/a=29-241"/>
</dbReference>
<dbReference type="PDB" id="6WJD">
    <property type="method" value="EM"/>
    <property type="resolution" value="4.80 A"/>
    <property type="chains" value="S/s=2-241"/>
</dbReference>
<dbReference type="PDB" id="6WJN">
    <property type="method" value="EM"/>
    <property type="resolution" value="5.70 A"/>
    <property type="chains" value="S/s=29-241"/>
</dbReference>
<dbReference type="PDB" id="6XMJ">
    <property type="method" value="EM"/>
    <property type="resolution" value="3.00 A"/>
    <property type="chains" value="M=29-241"/>
</dbReference>
<dbReference type="PDB" id="7AWE">
    <property type="method" value="X-ray"/>
    <property type="resolution" value="2.29 A"/>
    <property type="chains" value="M/a=29-241"/>
</dbReference>
<dbReference type="PDB" id="7B12">
    <property type="method" value="X-ray"/>
    <property type="resolution" value="2.43 A"/>
    <property type="chains" value="1/M=29-241"/>
</dbReference>
<dbReference type="PDB" id="7LXV">
    <property type="method" value="EM"/>
    <property type="resolution" value="3.40 A"/>
    <property type="chains" value="L/Z=29-241"/>
</dbReference>
<dbReference type="PDB" id="7NAN">
    <property type="method" value="EM"/>
    <property type="resolution" value="2.80 A"/>
    <property type="chains" value="L/Z=1-241"/>
</dbReference>
<dbReference type="PDB" id="7NAO">
    <property type="method" value="EM"/>
    <property type="resolution" value="2.90 A"/>
    <property type="chains" value="L/Z=1-241"/>
</dbReference>
<dbReference type="PDB" id="7NAP">
    <property type="method" value="EM"/>
    <property type="resolution" value="3.20 A"/>
    <property type="chains" value="L/Z=1-241"/>
</dbReference>
<dbReference type="PDB" id="7NAQ">
    <property type="method" value="EM"/>
    <property type="resolution" value="3.20 A"/>
    <property type="chains" value="L/Z=1-241"/>
</dbReference>
<dbReference type="PDB" id="7NHT">
    <property type="method" value="EM"/>
    <property type="resolution" value="2.80 A"/>
    <property type="chains" value="L=1-241"/>
</dbReference>
<dbReference type="PDB" id="7PG9">
    <property type="method" value="EM"/>
    <property type="resolution" value="3.70 A"/>
    <property type="chains" value="M/a=29-241"/>
</dbReference>
<dbReference type="PDB" id="7QXN">
    <property type="method" value="EM"/>
    <property type="resolution" value="3.70 A"/>
    <property type="chains" value="S/s=2-241"/>
</dbReference>
<dbReference type="PDB" id="7QXP">
    <property type="method" value="EM"/>
    <property type="resolution" value="3.60 A"/>
    <property type="chains" value="S/s=2-241"/>
</dbReference>
<dbReference type="PDB" id="7QXU">
    <property type="method" value="EM"/>
    <property type="resolution" value="4.30 A"/>
    <property type="chains" value="S/s=2-241"/>
</dbReference>
<dbReference type="PDB" id="7QXW">
    <property type="method" value="EM"/>
    <property type="resolution" value="4.10 A"/>
    <property type="chains" value="S/s=2-241"/>
</dbReference>
<dbReference type="PDB" id="7QXX">
    <property type="method" value="EM"/>
    <property type="resolution" value="4.40 A"/>
    <property type="chains" value="S/s=2-241"/>
</dbReference>
<dbReference type="PDB" id="7QY7">
    <property type="method" value="EM"/>
    <property type="resolution" value="4.70 A"/>
    <property type="chains" value="S/s=2-241"/>
</dbReference>
<dbReference type="PDB" id="7QYA">
    <property type="method" value="EM"/>
    <property type="resolution" value="4.80 A"/>
    <property type="chains" value="S/s=2-241"/>
</dbReference>
<dbReference type="PDB" id="7QYB">
    <property type="method" value="EM"/>
    <property type="resolution" value="4.10 A"/>
    <property type="chains" value="S/s=2-241"/>
</dbReference>
<dbReference type="PDB" id="7V5G">
    <property type="method" value="EM"/>
    <property type="resolution" value="4.47 A"/>
    <property type="chains" value="F/M=29-241"/>
</dbReference>
<dbReference type="PDB" id="7V5M">
    <property type="method" value="EM"/>
    <property type="resolution" value="3.88 A"/>
    <property type="chains" value="M/a=29-241"/>
</dbReference>
<dbReference type="PDB" id="7W37">
    <property type="method" value="EM"/>
    <property type="resolution" value="3.00 A"/>
    <property type="chains" value="S/s=1-241"/>
</dbReference>
<dbReference type="PDB" id="7W38">
    <property type="method" value="EM"/>
    <property type="resolution" value="3.10 A"/>
    <property type="chains" value="S/s=1-241"/>
</dbReference>
<dbReference type="PDB" id="7W39">
    <property type="method" value="EM"/>
    <property type="resolution" value="3.20 A"/>
    <property type="chains" value="S/s=1-241"/>
</dbReference>
<dbReference type="PDB" id="7W3A">
    <property type="method" value="EM"/>
    <property type="resolution" value="3.50 A"/>
    <property type="chains" value="S/s=1-241"/>
</dbReference>
<dbReference type="PDB" id="7W3B">
    <property type="method" value="EM"/>
    <property type="resolution" value="3.60 A"/>
    <property type="chains" value="S/s=1-241"/>
</dbReference>
<dbReference type="PDB" id="7W3C">
    <property type="method" value="EM"/>
    <property type="resolution" value="3.40 A"/>
    <property type="chains" value="S/s=1-241"/>
</dbReference>
<dbReference type="PDB" id="7W3F">
    <property type="method" value="EM"/>
    <property type="resolution" value="3.30 A"/>
    <property type="chains" value="S/s=1-241"/>
</dbReference>
<dbReference type="PDB" id="7W3G">
    <property type="method" value="EM"/>
    <property type="resolution" value="3.20 A"/>
    <property type="chains" value="S/s=1-241"/>
</dbReference>
<dbReference type="PDB" id="7W3H">
    <property type="method" value="EM"/>
    <property type="resolution" value="3.20 A"/>
    <property type="chains" value="S/s=1-241"/>
</dbReference>
<dbReference type="PDB" id="7W3I">
    <property type="method" value="EM"/>
    <property type="resolution" value="3.50 A"/>
    <property type="chains" value="S/s=1-241"/>
</dbReference>
<dbReference type="PDB" id="7W3J">
    <property type="method" value="EM"/>
    <property type="resolution" value="3.50 A"/>
    <property type="chains" value="S/s=1-241"/>
</dbReference>
<dbReference type="PDB" id="7W3K">
    <property type="method" value="EM"/>
    <property type="resolution" value="3.60 A"/>
    <property type="chains" value="S/s=1-241"/>
</dbReference>
<dbReference type="PDB" id="7W3M">
    <property type="method" value="EM"/>
    <property type="resolution" value="3.50 A"/>
    <property type="chains" value="S/s=1-241"/>
</dbReference>
<dbReference type="PDB" id="8BZL">
    <property type="method" value="X-ray"/>
    <property type="resolution" value="2.14 A"/>
    <property type="chains" value="L/Z=1-241"/>
</dbReference>
<dbReference type="PDB" id="8CVR">
    <property type="method" value="EM"/>
    <property type="resolution" value="2.70 A"/>
    <property type="chains" value="M/a=1-241"/>
</dbReference>
<dbReference type="PDB" id="8CVS">
    <property type="method" value="EM"/>
    <property type="resolution" value="3.10 A"/>
    <property type="chains" value="L/Z=1-241"/>
</dbReference>
<dbReference type="PDB" id="8CVT">
    <property type="method" value="EM"/>
    <property type="resolution" value="3.00 A"/>
    <property type="chains" value="S/s=1-241"/>
</dbReference>
<dbReference type="PDB" id="8CXB">
    <property type="method" value="EM"/>
    <property type="resolution" value="2.90 A"/>
    <property type="chains" value="L/Z=1-241"/>
</dbReference>
<dbReference type="PDB" id="8QYN">
    <property type="method" value="EM"/>
    <property type="resolution" value="2.88 A"/>
    <property type="chains" value="O=1-241"/>
</dbReference>
<dbReference type="PDB" id="8QYO">
    <property type="method" value="EM"/>
    <property type="resolution" value="2.84 A"/>
    <property type="chains" value="L/Z=1-241"/>
</dbReference>
<dbReference type="PDB" id="8QYS">
    <property type="method" value="EM"/>
    <property type="resolution" value="3.89 A"/>
    <property type="chains" value="O/f=30-241"/>
</dbReference>
<dbReference type="PDB" id="8QZ9">
    <property type="method" value="EM"/>
    <property type="resolution" value="2.95 A"/>
    <property type="chains" value="O=1-241"/>
</dbReference>
<dbReference type="PDB" id="8TM6">
    <property type="method" value="EM"/>
    <property type="resolution" value="2.80 A"/>
    <property type="chains" value="L/Z=1-241"/>
</dbReference>
<dbReference type="PDB" id="8UD9">
    <property type="method" value="EM"/>
    <property type="resolution" value="2.04 A"/>
    <property type="chains" value="M/a=29-241"/>
</dbReference>
<dbReference type="PDB" id="8YIX">
    <property type="method" value="EM"/>
    <property type="resolution" value="2.91 A"/>
    <property type="chains" value="L=1-241"/>
</dbReference>
<dbReference type="PDB" id="8YIY">
    <property type="method" value="EM"/>
    <property type="resolution" value="3.41 A"/>
    <property type="chains" value="L/Z=1-241"/>
</dbReference>
<dbReference type="PDB" id="8YIZ">
    <property type="method" value="EM"/>
    <property type="resolution" value="3.79 A"/>
    <property type="chains" value="L/Z=1-241"/>
</dbReference>
<dbReference type="PDB" id="9E8G">
    <property type="method" value="EM"/>
    <property type="resolution" value="3.01 A"/>
    <property type="chains" value="T=1-241"/>
</dbReference>
<dbReference type="PDB" id="9E8O">
    <property type="method" value="EM"/>
    <property type="resolution" value="3.10 A"/>
    <property type="chains" value="S=1-241"/>
</dbReference>
<dbReference type="PDB" id="9E8Q">
    <property type="method" value="EM"/>
    <property type="resolution" value="3.16 A"/>
    <property type="chains" value="S=1-241"/>
</dbReference>
<dbReference type="PDB" id="9HMN">
    <property type="method" value="EM"/>
    <property type="resolution" value="2.55 A"/>
    <property type="chains" value="M/W=29-241"/>
</dbReference>
<dbReference type="PDBsum" id="4R3O"/>
<dbReference type="PDBsum" id="4R67"/>
<dbReference type="PDBsum" id="5A0Q"/>
<dbReference type="PDBsum" id="5GJQ"/>
<dbReference type="PDBsum" id="5GJR"/>
<dbReference type="PDBsum" id="5L4G"/>
<dbReference type="PDBsum" id="5L5B"/>
<dbReference type="PDBsum" id="5L5D"/>
<dbReference type="PDBsum" id="5L5E"/>
<dbReference type="PDBsum" id="5L5F"/>
<dbReference type="PDBsum" id="5L5H"/>
<dbReference type="PDBsum" id="5L5I"/>
<dbReference type="PDBsum" id="5L5J"/>
<dbReference type="PDBsum" id="5L5O"/>
<dbReference type="PDBsum" id="5L5P"/>
<dbReference type="PDBsum" id="5L5Q"/>
<dbReference type="PDBsum" id="5L5R"/>
<dbReference type="PDBsum" id="5L5S"/>
<dbReference type="PDBsum" id="5L5T"/>
<dbReference type="PDBsum" id="5L5U"/>
<dbReference type="PDBsum" id="5L5V"/>
<dbReference type="PDBsum" id="5L5W"/>
<dbReference type="PDBsum" id="5L5X"/>
<dbReference type="PDBsum" id="5L5Y"/>
<dbReference type="PDBsum" id="5L5Z"/>
<dbReference type="PDBsum" id="5L60"/>
<dbReference type="PDBsum" id="5L61"/>
<dbReference type="PDBsum" id="5L62"/>
<dbReference type="PDBsum" id="5L63"/>
<dbReference type="PDBsum" id="5L64"/>
<dbReference type="PDBsum" id="5LE5"/>
<dbReference type="PDBsum" id="5LEX"/>
<dbReference type="PDBsum" id="5LEY"/>
<dbReference type="PDBsum" id="5LEZ"/>
<dbReference type="PDBsum" id="5LF0"/>
<dbReference type="PDBsum" id="5LF1"/>
<dbReference type="PDBsum" id="5LF3"/>
<dbReference type="PDBsum" id="5LF4"/>
<dbReference type="PDBsum" id="5LF6"/>
<dbReference type="PDBsum" id="5LF7"/>
<dbReference type="PDBsum" id="5LN3"/>
<dbReference type="PDBsum" id="5M2B"/>
<dbReference type="PDBsum" id="5M32"/>
<dbReference type="PDBsum" id="5T0C"/>
<dbReference type="PDBsum" id="5T0G"/>
<dbReference type="PDBsum" id="5T0H"/>
<dbReference type="PDBsum" id="5T0I"/>
<dbReference type="PDBsum" id="5T0J"/>
<dbReference type="PDBsum" id="5VFO"/>
<dbReference type="PDBsum" id="5VFP"/>
<dbReference type="PDBsum" id="5VFQ"/>
<dbReference type="PDBsum" id="5VFR"/>
<dbReference type="PDBsum" id="5VFS"/>
<dbReference type="PDBsum" id="5VFT"/>
<dbReference type="PDBsum" id="5VFU"/>
<dbReference type="PDBsum" id="6AVO"/>
<dbReference type="PDBsum" id="6E5B"/>
<dbReference type="PDBsum" id="6KWY"/>
<dbReference type="PDBsum" id="6MSB"/>
<dbReference type="PDBsum" id="6MSD"/>
<dbReference type="PDBsum" id="6MSE"/>
<dbReference type="PDBsum" id="6MSG"/>
<dbReference type="PDBsum" id="6MSH"/>
<dbReference type="PDBsum" id="6MSJ"/>
<dbReference type="PDBsum" id="6MSK"/>
<dbReference type="PDBsum" id="6R70"/>
<dbReference type="PDBsum" id="6REY"/>
<dbReference type="PDBsum" id="6RGQ"/>
<dbReference type="PDBsum" id="6WJD"/>
<dbReference type="PDBsum" id="6WJN"/>
<dbReference type="PDBsum" id="6XMJ"/>
<dbReference type="PDBsum" id="7AWE"/>
<dbReference type="PDBsum" id="7B12"/>
<dbReference type="PDBsum" id="7LXV"/>
<dbReference type="PDBsum" id="7NAN"/>
<dbReference type="PDBsum" id="7NAO"/>
<dbReference type="PDBsum" id="7NAP"/>
<dbReference type="PDBsum" id="7NAQ"/>
<dbReference type="PDBsum" id="7NHT"/>
<dbReference type="PDBsum" id="7PG9"/>
<dbReference type="PDBsum" id="7QXN"/>
<dbReference type="PDBsum" id="7QXP"/>
<dbReference type="PDBsum" id="7QXU"/>
<dbReference type="PDBsum" id="7QXW"/>
<dbReference type="PDBsum" id="7QXX"/>
<dbReference type="PDBsum" id="7QY7"/>
<dbReference type="PDBsum" id="7QYA"/>
<dbReference type="PDBsum" id="7QYB"/>
<dbReference type="PDBsum" id="7V5G"/>
<dbReference type="PDBsum" id="7V5M"/>
<dbReference type="PDBsum" id="7W37"/>
<dbReference type="PDBsum" id="7W38"/>
<dbReference type="PDBsum" id="7W39"/>
<dbReference type="PDBsum" id="7W3A"/>
<dbReference type="PDBsum" id="7W3B"/>
<dbReference type="PDBsum" id="7W3C"/>
<dbReference type="PDBsum" id="7W3F"/>
<dbReference type="PDBsum" id="7W3G"/>
<dbReference type="PDBsum" id="7W3H"/>
<dbReference type="PDBsum" id="7W3I"/>
<dbReference type="PDBsum" id="7W3J"/>
<dbReference type="PDBsum" id="7W3K"/>
<dbReference type="PDBsum" id="7W3M"/>
<dbReference type="PDBsum" id="8BZL"/>
<dbReference type="PDBsum" id="8CVR"/>
<dbReference type="PDBsum" id="8CVS"/>
<dbReference type="PDBsum" id="8CVT"/>
<dbReference type="PDBsum" id="8CXB"/>
<dbReference type="PDBsum" id="8QYN"/>
<dbReference type="PDBsum" id="8QYO"/>
<dbReference type="PDBsum" id="8QYS"/>
<dbReference type="PDBsum" id="8QZ9"/>
<dbReference type="PDBsum" id="8TM6"/>
<dbReference type="PDBsum" id="8UD9"/>
<dbReference type="PDBsum" id="8YIX"/>
<dbReference type="PDBsum" id="8YIY"/>
<dbReference type="PDBsum" id="8YIZ"/>
<dbReference type="PDBsum" id="9E8G"/>
<dbReference type="PDBsum" id="9E8O"/>
<dbReference type="PDBsum" id="9E8Q"/>
<dbReference type="PDBsum" id="9HMN"/>
<dbReference type="EMDB" id="EMD-0781"/>
<dbReference type="EMDB" id="EMD-12341"/>
<dbReference type="EMDB" id="EMD-13389"/>
<dbReference type="EMDB" id="EMD-14201"/>
<dbReference type="EMDB" id="EMD-14202"/>
<dbReference type="EMDB" id="EMD-14203"/>
<dbReference type="EMDB" id="EMD-14204"/>
<dbReference type="EMDB" id="EMD-14205"/>
<dbReference type="EMDB" id="EMD-14209"/>
<dbReference type="EMDB" id="EMD-14210"/>
<dbReference type="EMDB" id="EMD-14211"/>
<dbReference type="EMDB" id="EMD-18759"/>
<dbReference type="EMDB" id="EMD-18760"/>
<dbReference type="EMDB" id="EMD-18761"/>
<dbReference type="EMDB" id="EMD-18773"/>
<dbReference type="EMDB" id="EMD-21691"/>
<dbReference type="EMDB" id="EMD-21696"/>
<dbReference type="EMDB" id="EMD-22259"/>
<dbReference type="EMDB" id="EMD-23576"/>
<dbReference type="EMDB" id="EMD-24275"/>
<dbReference type="EMDB" id="EMD-24276"/>
<dbReference type="EMDB" id="EMD-24277"/>
<dbReference type="EMDB" id="EMD-24278"/>
<dbReference type="EMDB" id="EMD-27013"/>
<dbReference type="EMDB" id="EMD-27015"/>
<dbReference type="EMDB" id="EMD-27018"/>
<dbReference type="EMDB" id="EMD-2981"/>
<dbReference type="EMDB" id="EMD-31724"/>
<dbReference type="EMDB" id="EMD-31727"/>
<dbReference type="EMDB" id="EMD-32272"/>
<dbReference type="EMDB" id="EMD-32273"/>
<dbReference type="EMDB" id="EMD-32274"/>
<dbReference type="EMDB" id="EMD-32275"/>
<dbReference type="EMDB" id="EMD-32276"/>
<dbReference type="EMDB" id="EMD-32277"/>
<dbReference type="EMDB" id="EMD-32278"/>
<dbReference type="EMDB" id="EMD-32279"/>
<dbReference type="EMDB" id="EMD-32280"/>
<dbReference type="EMDB" id="EMD-32281"/>
<dbReference type="EMDB" id="EMD-32282"/>
<dbReference type="EMDB" id="EMD-32283"/>
<dbReference type="EMDB" id="EMD-32284"/>
<dbReference type="EMDB" id="EMD-39332"/>
<dbReference type="EMDB" id="EMD-39333"/>
<dbReference type="EMDB" id="EMD-39334"/>
<dbReference type="EMDB" id="EMD-4089"/>
<dbReference type="EMDB" id="EMD-41380"/>
<dbReference type="EMDB" id="EMD-4146"/>
<dbReference type="EMDB" id="EMD-42148"/>
<dbReference type="EMDB" id="EMD-4738"/>
<dbReference type="EMDB" id="EMD-47719"/>
<dbReference type="EMDB" id="EMD-47726"/>
<dbReference type="EMDB" id="EMD-47727"/>
<dbReference type="EMDB" id="EMD-4860"/>
<dbReference type="EMDB" id="EMD-4877"/>
<dbReference type="EMDB" id="EMD-52296"/>
<dbReference type="EMDB" id="EMD-60138"/>
<dbReference type="EMDB" id="EMD-60139"/>
<dbReference type="EMDB" id="EMD-7010"/>
<dbReference type="EMDB" id="EMD-8662"/>
<dbReference type="EMDB" id="EMD-8663"/>
<dbReference type="EMDB" id="EMD-8664"/>
<dbReference type="EMDB" id="EMD-8665"/>
<dbReference type="EMDB" id="EMD-8666"/>
<dbReference type="EMDB" id="EMD-8667"/>
<dbReference type="EMDB" id="EMD-8668"/>
<dbReference type="EMDB" id="EMD-9216"/>
<dbReference type="EMDB" id="EMD-9217"/>
<dbReference type="EMDB" id="EMD-9218"/>
<dbReference type="EMDB" id="EMD-9219"/>
<dbReference type="EMDB" id="EMD-9220"/>
<dbReference type="EMDB" id="EMD-9221"/>
<dbReference type="EMDB" id="EMD-9222"/>
<dbReference type="EMDB" id="EMD-9511"/>
<dbReference type="EMDB" id="EMD-9512"/>
<dbReference type="SMR" id="P20618"/>
<dbReference type="BioGRID" id="111662">
    <property type="interactions" value="354"/>
</dbReference>
<dbReference type="ComplexPortal" id="CPX-5993">
    <property type="entry name" value="26S proteasome complex"/>
</dbReference>
<dbReference type="ComplexPortal" id="CPX-8806">
    <property type="entry name" value="20S proteasome complex"/>
</dbReference>
<dbReference type="ComplexPortal" id="CPX-8841">
    <property type="entry name" value="PA200-20S single-capped proteasome"/>
</dbReference>
<dbReference type="ComplexPortal" id="CPX-8842">
    <property type="entry name" value="PA28-alphabeta double-capped 20S proteasome complex"/>
</dbReference>
<dbReference type="ComplexPortal" id="CPX-9001">
    <property type="entry name" value="PA28-gamma single-capped 20S proteasome complex"/>
</dbReference>
<dbReference type="ComplexPortal" id="CPX-9002">
    <property type="entry name" value="PA28-alphabeta single-capped 20S proteasome complex"/>
</dbReference>
<dbReference type="ComplexPortal" id="CPX-9003">
    <property type="entry name" value="20S immunoproteasome complex"/>
</dbReference>
<dbReference type="ComplexPortal" id="CPX-9004">
    <property type="entry name" value="20S thymoproteasome complex"/>
</dbReference>
<dbReference type="ComplexPortal" id="CPX-9021">
    <property type="entry name" value="20S spermatoproteasome complex"/>
</dbReference>
<dbReference type="ComplexPortal" id="CPX-9022">
    <property type="entry name" value="PA28-gamma double-capped 20S proteasome complex"/>
</dbReference>
<dbReference type="ComplexPortal" id="CPX-9063">
    <property type="entry name" value="PA200-20S-PA200 double-capped proteasome complex"/>
</dbReference>
<dbReference type="ComplexPortal" id="CPX-9082">
    <property type="entry name" value="19S-20S-PA28-alphabeta hybrid proteasome complex"/>
</dbReference>
<dbReference type="ComplexPortal" id="CPX-9085">
    <property type="entry name" value="19S-20S-PA28-gamma hybrid proteasome complex"/>
</dbReference>
<dbReference type="ComplexPortal" id="CPX-9086">
    <property type="entry name" value="30S proteasome complex"/>
</dbReference>
<dbReference type="CORUM" id="P20618"/>
<dbReference type="DIP" id="DIP-31193N"/>
<dbReference type="FunCoup" id="P20618">
    <property type="interactions" value="2250"/>
</dbReference>
<dbReference type="IntAct" id="P20618">
    <property type="interactions" value="210"/>
</dbReference>
<dbReference type="MINT" id="P20618"/>
<dbReference type="STRING" id="9606.ENSP00000262193"/>
<dbReference type="BindingDB" id="P20618"/>
<dbReference type="ChEMBL" id="CHEMBL4208"/>
<dbReference type="DrugBank" id="DB08515">
    <property type="generic name" value="(3AR,6R,6AS)-6-((S)-((S)-CYCLOHEX-2-ENYL)(HYDROXY)METHYL)-6A-METHYL-4-OXO-HEXAHYDRO-2H-FURO[3,2-C]PYRROLE-6-CARBALDEHYDE"/>
</dbReference>
<dbReference type="DrugBank" id="DB00188">
    <property type="generic name" value="Bortezomib"/>
</dbReference>
<dbReference type="DrugBank" id="DB08889">
    <property type="generic name" value="Carfilzomib"/>
</dbReference>
<dbReference type="DrugCentral" id="P20618"/>
<dbReference type="GuidetoPHARMACOLOGY" id="2404"/>
<dbReference type="MEROPS" id="T01.986"/>
<dbReference type="GlyCosmos" id="P20618">
    <property type="glycosylation" value="2 sites, No reported glycans"/>
</dbReference>
<dbReference type="GlyGen" id="P20618">
    <property type="glycosylation" value="4 sites, 1 O-linked glycan (2 sites)"/>
</dbReference>
<dbReference type="iPTMnet" id="P20618"/>
<dbReference type="MetOSite" id="P20618"/>
<dbReference type="PhosphoSitePlus" id="P20618"/>
<dbReference type="SwissPalm" id="P20618"/>
<dbReference type="BioMuta" id="PSMB1"/>
<dbReference type="DMDM" id="130853"/>
<dbReference type="REPRODUCTION-2DPAGE" id="IPI00025019"/>
<dbReference type="jPOST" id="P20618"/>
<dbReference type="MassIVE" id="P20618"/>
<dbReference type="PaxDb" id="9606-ENSP00000262193"/>
<dbReference type="PeptideAtlas" id="P20618"/>
<dbReference type="ProteomicsDB" id="53768"/>
<dbReference type="Pumba" id="P20618"/>
<dbReference type="TopDownProteomics" id="P20618"/>
<dbReference type="Antibodypedia" id="33582">
    <property type="antibodies" value="235 antibodies from 32 providers"/>
</dbReference>
<dbReference type="DNASU" id="5689"/>
<dbReference type="Ensembl" id="ENST00000262193.7">
    <property type="protein sequence ID" value="ENSP00000262193.6"/>
    <property type="gene ID" value="ENSG00000008018.9"/>
</dbReference>
<dbReference type="GeneID" id="5689"/>
<dbReference type="KEGG" id="hsa:5689"/>
<dbReference type="MANE-Select" id="ENST00000262193.7">
    <property type="protein sequence ID" value="ENSP00000262193.6"/>
    <property type="RefSeq nucleotide sequence ID" value="NM_002793.4"/>
    <property type="RefSeq protein sequence ID" value="NP_002784.1"/>
</dbReference>
<dbReference type="UCSC" id="uc011ehe.3">
    <property type="organism name" value="human"/>
</dbReference>
<dbReference type="AGR" id="HGNC:9537"/>
<dbReference type="CTD" id="5689"/>
<dbReference type="DisGeNET" id="5689"/>
<dbReference type="GeneCards" id="PSMB1"/>
<dbReference type="HGNC" id="HGNC:9537">
    <property type="gene designation" value="PSMB1"/>
</dbReference>
<dbReference type="HPA" id="ENSG00000008018">
    <property type="expression patterns" value="Low tissue specificity"/>
</dbReference>
<dbReference type="MalaCards" id="PSMB1"/>
<dbReference type="MIM" id="602017">
    <property type="type" value="gene"/>
</dbReference>
<dbReference type="MIM" id="620038">
    <property type="type" value="phenotype"/>
</dbReference>
<dbReference type="neXtProt" id="NX_P20618"/>
<dbReference type="OpenTargets" id="ENSG00000008018"/>
<dbReference type="PharmGKB" id="PA33882"/>
<dbReference type="VEuPathDB" id="HostDB:ENSG00000008018"/>
<dbReference type="eggNOG" id="KOG0179">
    <property type="taxonomic scope" value="Eukaryota"/>
</dbReference>
<dbReference type="GeneTree" id="ENSGT00550000075035"/>
<dbReference type="HOGENOM" id="CLU_035750_1_1_1"/>
<dbReference type="InParanoid" id="P20618"/>
<dbReference type="OMA" id="CSGCWCD"/>
<dbReference type="OrthoDB" id="268479at2759"/>
<dbReference type="PAN-GO" id="P20618">
    <property type="GO annotations" value="4 GO annotations based on evolutionary models"/>
</dbReference>
<dbReference type="PhylomeDB" id="P20618"/>
<dbReference type="TreeFam" id="TF106218"/>
<dbReference type="PathwayCommons" id="P20618"/>
<dbReference type="Reactome" id="R-HSA-1169091">
    <property type="pathway name" value="Activation of NF-kappaB in B cells"/>
</dbReference>
<dbReference type="Reactome" id="R-HSA-1234176">
    <property type="pathway name" value="Oxygen-dependent proline hydroxylation of Hypoxia-inducible Factor Alpha"/>
</dbReference>
<dbReference type="Reactome" id="R-HSA-1236974">
    <property type="pathway name" value="ER-Phagosome pathway"/>
</dbReference>
<dbReference type="Reactome" id="R-HSA-1236978">
    <property type="pathway name" value="Cross-presentation of soluble exogenous antigens (endosomes)"/>
</dbReference>
<dbReference type="Reactome" id="R-HSA-174084">
    <property type="pathway name" value="Autodegradation of Cdh1 by Cdh1:APC/C"/>
</dbReference>
<dbReference type="Reactome" id="R-HSA-174113">
    <property type="pathway name" value="SCF-beta-TrCP mediated degradation of Emi1"/>
</dbReference>
<dbReference type="Reactome" id="R-HSA-174154">
    <property type="pathway name" value="APC/C:Cdc20 mediated degradation of Securin"/>
</dbReference>
<dbReference type="Reactome" id="R-HSA-174178">
    <property type="pathway name" value="APC/C:Cdh1 mediated degradation of Cdc20 and other APC/C:Cdh1 targeted proteins in late mitosis/early G1"/>
</dbReference>
<dbReference type="Reactome" id="R-HSA-174184">
    <property type="pathway name" value="Cdc20:Phospho-APC/C mediated degradation of Cyclin A"/>
</dbReference>
<dbReference type="Reactome" id="R-HSA-180534">
    <property type="pathway name" value="Vpu mediated degradation of CD4"/>
</dbReference>
<dbReference type="Reactome" id="R-HSA-180585">
    <property type="pathway name" value="Vif-mediated degradation of APOBEC3G"/>
</dbReference>
<dbReference type="Reactome" id="R-HSA-187577">
    <property type="pathway name" value="SCF(Skp2)-mediated degradation of p27/p21"/>
</dbReference>
<dbReference type="Reactome" id="R-HSA-195253">
    <property type="pathway name" value="Degradation of beta-catenin by the destruction complex"/>
</dbReference>
<dbReference type="Reactome" id="R-HSA-202424">
    <property type="pathway name" value="Downstream TCR signaling"/>
</dbReference>
<dbReference type="Reactome" id="R-HSA-211733">
    <property type="pathway name" value="Regulation of activated PAK-2p34 by proteasome mediated degradation"/>
</dbReference>
<dbReference type="Reactome" id="R-HSA-2467813">
    <property type="pathway name" value="Separation of Sister Chromatids"/>
</dbReference>
<dbReference type="Reactome" id="R-HSA-2871837">
    <property type="pathway name" value="FCERI mediated NF-kB activation"/>
</dbReference>
<dbReference type="Reactome" id="R-HSA-349425">
    <property type="pathway name" value="Autodegradation of the E3 ubiquitin ligase COP1"/>
</dbReference>
<dbReference type="Reactome" id="R-HSA-350562">
    <property type="pathway name" value="Regulation of ornithine decarboxylase (ODC)"/>
</dbReference>
<dbReference type="Reactome" id="R-HSA-382556">
    <property type="pathway name" value="ABC-family proteins mediated transport"/>
</dbReference>
<dbReference type="Reactome" id="R-HSA-450408">
    <property type="pathway name" value="AUF1 (hnRNP D0) binds and destabilizes mRNA"/>
</dbReference>
<dbReference type="Reactome" id="R-HSA-4608870">
    <property type="pathway name" value="Asymmetric localization of PCP proteins"/>
</dbReference>
<dbReference type="Reactome" id="R-HSA-4641257">
    <property type="pathway name" value="Degradation of AXIN"/>
</dbReference>
<dbReference type="Reactome" id="R-HSA-4641258">
    <property type="pathway name" value="Degradation of DVL"/>
</dbReference>
<dbReference type="Reactome" id="R-HSA-5358346">
    <property type="pathway name" value="Hedgehog ligand biogenesis"/>
</dbReference>
<dbReference type="Reactome" id="R-HSA-5362768">
    <property type="pathway name" value="Hh mutants are degraded by ERAD"/>
</dbReference>
<dbReference type="Reactome" id="R-HSA-5607761">
    <property type="pathway name" value="Dectin-1 mediated noncanonical NF-kB signaling"/>
</dbReference>
<dbReference type="Reactome" id="R-HSA-5607764">
    <property type="pathway name" value="CLEC7A (Dectin-1) signaling"/>
</dbReference>
<dbReference type="Reactome" id="R-HSA-5610780">
    <property type="pathway name" value="Degradation of GLI1 by the proteasome"/>
</dbReference>
<dbReference type="Reactome" id="R-HSA-5610783">
    <property type="pathway name" value="Degradation of GLI2 by the proteasome"/>
</dbReference>
<dbReference type="Reactome" id="R-HSA-5610785">
    <property type="pathway name" value="GLI3 is processed to GLI3R by the proteasome"/>
</dbReference>
<dbReference type="Reactome" id="R-HSA-5632684">
    <property type="pathway name" value="Hedgehog 'on' state"/>
</dbReference>
<dbReference type="Reactome" id="R-HSA-5658442">
    <property type="pathway name" value="Regulation of RAS by GAPs"/>
</dbReference>
<dbReference type="Reactome" id="R-HSA-5668541">
    <property type="pathway name" value="TNFR2 non-canonical NF-kB pathway"/>
</dbReference>
<dbReference type="Reactome" id="R-HSA-5676590">
    <property type="pathway name" value="NIK--&gt;noncanonical NF-kB signaling"/>
</dbReference>
<dbReference type="Reactome" id="R-HSA-5678895">
    <property type="pathway name" value="Defective CFTR causes cystic fibrosis"/>
</dbReference>
<dbReference type="Reactome" id="R-HSA-5687128">
    <property type="pathway name" value="MAPK6/MAPK4 signaling"/>
</dbReference>
<dbReference type="Reactome" id="R-HSA-5689603">
    <property type="pathway name" value="UCH proteinases"/>
</dbReference>
<dbReference type="Reactome" id="R-HSA-5689880">
    <property type="pathway name" value="Ub-specific processing proteases"/>
</dbReference>
<dbReference type="Reactome" id="R-HSA-6798695">
    <property type="pathway name" value="Neutrophil degranulation"/>
</dbReference>
<dbReference type="Reactome" id="R-HSA-68867">
    <property type="pathway name" value="Assembly of the pre-replicative complex"/>
</dbReference>
<dbReference type="Reactome" id="R-HSA-68949">
    <property type="pathway name" value="Orc1 removal from chromatin"/>
</dbReference>
<dbReference type="Reactome" id="R-HSA-69017">
    <property type="pathway name" value="CDK-mediated phosphorylation and removal of Cdc6"/>
</dbReference>
<dbReference type="Reactome" id="R-HSA-69481">
    <property type="pathway name" value="G2/M Checkpoints"/>
</dbReference>
<dbReference type="Reactome" id="R-HSA-69601">
    <property type="pathway name" value="Ubiquitin Mediated Degradation of Phosphorylated Cdc25A"/>
</dbReference>
<dbReference type="Reactome" id="R-HSA-75815">
    <property type="pathway name" value="Ubiquitin-dependent degradation of Cyclin D"/>
</dbReference>
<dbReference type="Reactome" id="R-HSA-8852276">
    <property type="pathway name" value="The role of GTSE1 in G2/M progression after G2 checkpoint"/>
</dbReference>
<dbReference type="Reactome" id="R-HSA-8854050">
    <property type="pathway name" value="FBXL7 down-regulates AURKA during mitotic entry and in early mitosis"/>
</dbReference>
<dbReference type="Reactome" id="R-HSA-8939236">
    <property type="pathway name" value="RUNX1 regulates transcription of genes involved in differentiation of HSCs"/>
</dbReference>
<dbReference type="Reactome" id="R-HSA-8939902">
    <property type="pathway name" value="Regulation of RUNX2 expression and activity"/>
</dbReference>
<dbReference type="Reactome" id="R-HSA-8941858">
    <property type="pathway name" value="Regulation of RUNX3 expression and activity"/>
</dbReference>
<dbReference type="Reactome" id="R-HSA-8948751">
    <property type="pathway name" value="Regulation of PTEN stability and activity"/>
</dbReference>
<dbReference type="Reactome" id="R-HSA-8951664">
    <property type="pathway name" value="Neddylation"/>
</dbReference>
<dbReference type="Reactome" id="R-HSA-9010553">
    <property type="pathway name" value="Regulation of expression of SLITs and ROBOs"/>
</dbReference>
<dbReference type="Reactome" id="R-HSA-9020702">
    <property type="pathway name" value="Interleukin-1 signaling"/>
</dbReference>
<dbReference type="Reactome" id="R-HSA-9604323">
    <property type="pathway name" value="Negative regulation of NOTCH4 signaling"/>
</dbReference>
<dbReference type="Reactome" id="R-HSA-9755511">
    <property type="pathway name" value="KEAP1-NFE2L2 pathway"/>
</dbReference>
<dbReference type="Reactome" id="R-HSA-9762114">
    <property type="pathway name" value="GSK3B and BTRC:CUL1-mediated-degradation of NFE2L2"/>
</dbReference>
<dbReference type="Reactome" id="R-HSA-9824272">
    <property type="pathway name" value="Somitogenesis"/>
</dbReference>
<dbReference type="Reactome" id="R-HSA-983168">
    <property type="pathway name" value="Antigen processing: Ubiquitination &amp; Proteasome degradation"/>
</dbReference>
<dbReference type="Reactome" id="R-HSA-9907900">
    <property type="pathway name" value="Proteasome assembly"/>
</dbReference>
<dbReference type="SignaLink" id="P20618"/>
<dbReference type="SIGNOR" id="P20618"/>
<dbReference type="BioGRID-ORCS" id="5689">
    <property type="hits" value="788 hits in 1180 CRISPR screens"/>
</dbReference>
<dbReference type="ChiTaRS" id="PSMB1">
    <property type="organism name" value="human"/>
</dbReference>
<dbReference type="EvolutionaryTrace" id="P20618"/>
<dbReference type="GeneWiki" id="PSMB1"/>
<dbReference type="GenomeRNAi" id="5689"/>
<dbReference type="Pharos" id="P20618">
    <property type="development level" value="Tclin"/>
</dbReference>
<dbReference type="PRO" id="PR:P20618"/>
<dbReference type="Proteomes" id="UP000005640">
    <property type="component" value="Chromosome 6"/>
</dbReference>
<dbReference type="RNAct" id="P20618">
    <property type="molecule type" value="protein"/>
</dbReference>
<dbReference type="Bgee" id="ENSG00000008018">
    <property type="expression patterns" value="Expressed in gingival epithelium and 212 other cell types or tissues"/>
</dbReference>
<dbReference type="ExpressionAtlas" id="P20618">
    <property type="expression patterns" value="baseline and differential"/>
</dbReference>
<dbReference type="GO" id="GO:0005737">
    <property type="term" value="C:cytoplasm"/>
    <property type="evidence" value="ECO:0000314"/>
    <property type="project" value="UniProtKB"/>
</dbReference>
<dbReference type="GO" id="GO:0005829">
    <property type="term" value="C:cytosol"/>
    <property type="evidence" value="ECO:0000304"/>
    <property type="project" value="Reactome"/>
</dbReference>
<dbReference type="GO" id="GO:0070062">
    <property type="term" value="C:extracellular exosome"/>
    <property type="evidence" value="ECO:0007005"/>
    <property type="project" value="UniProtKB"/>
</dbReference>
<dbReference type="GO" id="GO:0005576">
    <property type="term" value="C:extracellular region"/>
    <property type="evidence" value="ECO:0000304"/>
    <property type="project" value="Reactome"/>
</dbReference>
<dbReference type="GO" id="GO:1904813">
    <property type="term" value="C:ficolin-1-rich granule lumen"/>
    <property type="evidence" value="ECO:0000304"/>
    <property type="project" value="Reactome"/>
</dbReference>
<dbReference type="GO" id="GO:0005654">
    <property type="term" value="C:nucleoplasm"/>
    <property type="evidence" value="ECO:0000314"/>
    <property type="project" value="HPA"/>
</dbReference>
<dbReference type="GO" id="GO:0005634">
    <property type="term" value="C:nucleus"/>
    <property type="evidence" value="ECO:0000314"/>
    <property type="project" value="UniProtKB"/>
</dbReference>
<dbReference type="GO" id="GO:0000502">
    <property type="term" value="C:proteasome complex"/>
    <property type="evidence" value="ECO:0000314"/>
    <property type="project" value="UniProtKB"/>
</dbReference>
<dbReference type="GO" id="GO:0005839">
    <property type="term" value="C:proteasome core complex"/>
    <property type="evidence" value="ECO:0000314"/>
    <property type="project" value="UniProtKB"/>
</dbReference>
<dbReference type="GO" id="GO:0019774">
    <property type="term" value="C:proteasome core complex, beta-subunit complex"/>
    <property type="evidence" value="ECO:0000250"/>
    <property type="project" value="UniProtKB"/>
</dbReference>
<dbReference type="GO" id="GO:0034774">
    <property type="term" value="C:secretory granule lumen"/>
    <property type="evidence" value="ECO:0000304"/>
    <property type="project" value="Reactome"/>
</dbReference>
<dbReference type="GO" id="GO:0043161">
    <property type="term" value="P:proteasome-mediated ubiquitin-dependent protein catabolic process"/>
    <property type="evidence" value="ECO:0000303"/>
    <property type="project" value="ComplexPortal"/>
</dbReference>
<dbReference type="GO" id="GO:0051603">
    <property type="term" value="P:proteolysis involved in protein catabolic process"/>
    <property type="evidence" value="ECO:0000318"/>
    <property type="project" value="GO_Central"/>
</dbReference>
<dbReference type="CDD" id="cd03757">
    <property type="entry name" value="proteasome_beta_type_1"/>
    <property type="match status" value="1"/>
</dbReference>
<dbReference type="FunFam" id="3.60.20.10:FF:000033">
    <property type="entry name" value="Proteasome subunit beta"/>
    <property type="match status" value="1"/>
</dbReference>
<dbReference type="Gene3D" id="3.60.20.10">
    <property type="entry name" value="Glutamine Phosphoribosylpyrophosphate, subunit 1, domain 1"/>
    <property type="match status" value="1"/>
</dbReference>
<dbReference type="InterPro" id="IPR029055">
    <property type="entry name" value="Ntn_hydrolases_N"/>
</dbReference>
<dbReference type="InterPro" id="IPR016050">
    <property type="entry name" value="Proteasome_bsu_CS"/>
</dbReference>
<dbReference type="InterPro" id="IPR001353">
    <property type="entry name" value="Proteasome_sua/b"/>
</dbReference>
<dbReference type="InterPro" id="IPR023333">
    <property type="entry name" value="Proteasome_suB-type"/>
</dbReference>
<dbReference type="PANTHER" id="PTHR32194">
    <property type="entry name" value="METALLOPROTEASE TLDD"/>
    <property type="match status" value="1"/>
</dbReference>
<dbReference type="PANTHER" id="PTHR32194:SF2">
    <property type="entry name" value="PROTEASOME SUBUNIT BETA TYPE-1"/>
    <property type="match status" value="1"/>
</dbReference>
<dbReference type="Pfam" id="PF00227">
    <property type="entry name" value="Proteasome"/>
    <property type="match status" value="1"/>
</dbReference>
<dbReference type="SUPFAM" id="SSF56235">
    <property type="entry name" value="N-terminal nucleophile aminohydrolases (Ntn hydrolases)"/>
    <property type="match status" value="1"/>
</dbReference>
<dbReference type="PROSITE" id="PS00854">
    <property type="entry name" value="PROTEASOME_BETA_1"/>
    <property type="match status" value="1"/>
</dbReference>
<dbReference type="PROSITE" id="PS51476">
    <property type="entry name" value="PROTEASOME_BETA_2"/>
    <property type="match status" value="1"/>
</dbReference>
<keyword id="KW-0002">3D-structure</keyword>
<keyword id="KW-0007">Acetylation</keyword>
<keyword id="KW-0963">Cytoplasm</keyword>
<keyword id="KW-0209">Deafness</keyword>
<keyword id="KW-0903">Direct protein sequencing</keyword>
<keyword id="KW-0325">Glycoprotein</keyword>
<keyword id="KW-0945">Host-virus interaction</keyword>
<keyword id="KW-0991">Intellectual disability</keyword>
<keyword id="KW-0539">Nucleus</keyword>
<keyword id="KW-0597">Phosphoprotein</keyword>
<keyword id="KW-0647">Proteasome</keyword>
<keyword id="KW-1267">Proteomics identification</keyword>
<keyword id="KW-1185">Reference proteome</keyword>
<organism>
    <name type="scientific">Homo sapiens</name>
    <name type="common">Human</name>
    <dbReference type="NCBI Taxonomy" id="9606"/>
    <lineage>
        <taxon>Eukaryota</taxon>
        <taxon>Metazoa</taxon>
        <taxon>Chordata</taxon>
        <taxon>Craniata</taxon>
        <taxon>Vertebrata</taxon>
        <taxon>Euteleostomi</taxon>
        <taxon>Mammalia</taxon>
        <taxon>Eutheria</taxon>
        <taxon>Euarchontoglires</taxon>
        <taxon>Primates</taxon>
        <taxon>Haplorrhini</taxon>
        <taxon>Catarrhini</taxon>
        <taxon>Hominidae</taxon>
        <taxon>Homo</taxon>
    </lineage>
</organism>
<name>PSB1_HUMAN</name>
<protein>
    <recommendedName>
        <fullName evidence="20">Proteasome subunit beta type-1</fullName>
    </recommendedName>
    <alternativeName>
        <fullName>Macropain subunit C5</fullName>
    </alternativeName>
    <alternativeName>
        <fullName>Multicatalytic endopeptidase complex subunit C5</fullName>
    </alternativeName>
    <alternativeName>
        <fullName>Proteasome component C5</fullName>
    </alternativeName>
    <alternativeName>
        <fullName>Proteasome gamma chain</fullName>
    </alternativeName>
    <alternativeName>
        <fullName evidence="19">Proteasome subunit beta-6</fullName>
        <shortName evidence="19">beta-6</shortName>
    </alternativeName>
</protein>
<accession>P20618</accession>
<accession>B5BU76</accession>
<accession>Q9BWA8</accession>
<proteinExistence type="evidence at protein level"/>
<sequence>MLSSTAMYSAPGRDLGMEPHRAAGPLQLRFSPYVFNGGTILAIAGEDFAIVASDTRLSEGFSIHTRDSPKCYKLTDKTVIGCSGFHGDCLTLTKIIEARLKMYKHSNNKAMTTGAIAAMLSTILYSRRFFPYYVYNIIGGLDEEGKGAVYSFDPVGSYQRDSFKAGGSASAMLQPLLDNQVGFKNMQNVEHVPLSLDRAMRLVKDVFISAAERDVYTGDALRICIVTKEGIREETVSLRKD</sequence>
<comment type="function">
    <text evidence="7 12 18">Non-catalytic component of the 20S core proteasome complex involved in the proteolytic degradation of most intracellular proteins. This complex plays numerous essential roles within the cell by associating with different regulatory particles. Associated with two 19S regulatory particles, forms the 26S proteasome and thus participates in the ATP-dependent degradation of ubiquitinated proteins. The 26S proteasome plays a key role in the maintenance of protein homeostasis by removing misfolded or damaged proteins that could impair cellular functions, and by removing proteins whose functions are no longer required. Associated with the PA200 or PA28, the 20S proteasome mediates ubiquitin-independent protein degradation. This type of proteolysis is required in several pathways including spermatogenesis (20S-PA200 complex) or generation of a subset of MHC class I-presented antigenic peptides (20S-PA28 complex).</text>
</comment>
<comment type="subunit">
    <text evidence="2 6 10 11 13 14 15 17">The 26S proteasome consists of a 20S proteasome core and two 19S regulatory subunits (PubMed:25599644, PubMed:26133119, PubMed:27342858, PubMed:27428775, PubMed:27493187, PubMed:34711951). The 20S proteasome core is a barrel-shaped complex made of 28 subunits that are arranged in four stacked rings (PubMed:25599644, PubMed:26133119, PubMed:27342858, PubMed:27428775, PubMed:27493187, PubMed:34711951). The two outer rings are each formed by seven alpha subunits, and the two inner rings are formed by seven beta subunits (PubMed:25599644, PubMed:26133119, PubMed:27342858, PubMed:27428775, PubMed:27493187, PubMed:34711951). The proteolytic activity is exerted by three beta-subunits PSMB5, PSMB6 and PSMB7 (PubMed:25599644, PubMed:26133119, PubMed:27342858, PubMed:27428775, PubMed:27493187, PubMed:34711951). Interacts with SERPINB2 (PubMed:14732874). Interacts with RFPL4A (By similarity).</text>
</comment>
<comment type="subunit">
    <text evidence="5">(Microbial infection) Interacts with HIV-1 protein Tat.</text>
</comment>
<comment type="interaction">
    <interactant intactId="EBI-372273">
        <id>P20618</id>
    </interactant>
    <interactant intactId="EBI-712648">
        <id>O95994</id>
        <label>AGR2</label>
    </interactant>
    <organismsDiffer>false</organismsDiffer>
    <experiments>3</experiments>
</comment>
<comment type="interaction">
    <interactant intactId="EBI-372273">
        <id>P20618</id>
    </interactant>
    <interactant intactId="EBI-720250">
        <id>Q9NZD4</id>
        <label>AHSP</label>
    </interactant>
    <organismsDiffer>false</organismsDiffer>
    <experiments>3</experiments>
</comment>
<comment type="interaction">
    <interactant intactId="EBI-372273">
        <id>P20618</id>
    </interactant>
    <interactant intactId="EBI-765971">
        <id>Q9HBZ2</id>
        <label>ARNT2</label>
    </interactant>
    <organismsDiffer>false</organismsDiffer>
    <experiments>3</experiments>
</comment>
<comment type="interaction">
    <interactant intactId="EBI-372273">
        <id>P20618</id>
    </interactant>
    <interactant intactId="EBI-10181188">
        <id>Q8N7W2-2</id>
        <label>BEND7</label>
    </interactant>
    <organismsDiffer>false</organismsDiffer>
    <experiments>3</experiments>
</comment>
<comment type="interaction">
    <interactant intactId="EBI-372273">
        <id>P20618</id>
    </interactant>
    <interactant intactId="EBI-517623">
        <id>Q96CA5</id>
        <label>BIRC7</label>
    </interactant>
    <organismsDiffer>false</organismsDiffer>
    <experiments>5</experiments>
</comment>
<comment type="interaction">
    <interactant intactId="EBI-372273">
        <id>P20618</id>
    </interactant>
    <interactant intactId="EBI-953896">
        <id>Q9NP55</id>
        <label>BPIFA1</label>
    </interactant>
    <organismsDiffer>false</organismsDiffer>
    <experiments>3</experiments>
</comment>
<comment type="interaction">
    <interactant intactId="EBI-372273">
        <id>P20618</id>
    </interactant>
    <interactant intactId="EBI-12020154">
        <id>Q13555-5</id>
        <label>CAMK2G</label>
    </interactant>
    <organismsDiffer>false</organismsDiffer>
    <experiments>3</experiments>
</comment>
<comment type="interaction">
    <interactant intactId="EBI-372273">
        <id>P20618</id>
    </interactant>
    <interactant intactId="EBI-350645">
        <id>Q9NUG4</id>
        <label>CCM2L</label>
    </interactant>
    <organismsDiffer>false</organismsDiffer>
    <experiments>3</experiments>
</comment>
<comment type="interaction">
    <interactant intactId="EBI-372273">
        <id>P20618</id>
    </interactant>
    <interactant intactId="EBI-970231">
        <id>O60729</id>
        <label>CDC14B</label>
    </interactant>
    <organismsDiffer>false</organismsDiffer>
    <experiments>3</experiments>
</comment>
<comment type="interaction">
    <interactant intactId="EBI-372273">
        <id>P20618</id>
    </interactant>
    <interactant intactId="EBI-1056029">
        <id>Q16740</id>
        <label>CLPP</label>
    </interactant>
    <organismsDiffer>false</organismsDiffer>
    <experiments>3</experiments>
</comment>
<comment type="interaction">
    <interactant intactId="EBI-372273">
        <id>P20618</id>
    </interactant>
    <interactant intactId="EBI-3866319">
        <id>Q9Y2V7</id>
        <label>COG6</label>
    </interactant>
    <organismsDiffer>false</organismsDiffer>
    <experiments>3</experiments>
</comment>
<comment type="interaction">
    <interactant intactId="EBI-372273">
        <id>P20618</id>
    </interactant>
    <interactant intactId="EBI-1188472">
        <id>P78358</id>
        <label>CTAG1B</label>
    </interactant>
    <organismsDiffer>false</organismsDiffer>
    <experiments>3</experiments>
</comment>
<comment type="interaction">
    <interactant intactId="EBI-372273">
        <id>P20618</id>
    </interactant>
    <interactant intactId="EBI-11521003">
        <id>Q9UIA0</id>
        <label>CYTH4</label>
    </interactant>
    <organismsDiffer>false</organismsDiffer>
    <experiments>3</experiments>
</comment>
<comment type="interaction">
    <interactant intactId="EBI-372273">
        <id>P20618</id>
    </interactant>
    <interactant intactId="EBI-748248">
        <id>Q8WTU0</id>
        <label>DDI1</label>
    </interactant>
    <organismsDiffer>false</organismsDiffer>
    <experiments>3</experiments>
</comment>
<comment type="interaction">
    <interactant intactId="EBI-372273">
        <id>P20618</id>
    </interactant>
    <interactant intactId="EBI-373319">
        <id>Q96C01</id>
        <label>FAM136A</label>
    </interactant>
    <organismsDiffer>false</organismsDiffer>
    <experiments>3</experiments>
</comment>
<comment type="interaction">
    <interactant intactId="EBI-372273">
        <id>P20618</id>
    </interactant>
    <interactant intactId="EBI-742802">
        <id>Q9Y247</id>
        <label>FAM50B</label>
    </interactant>
    <organismsDiffer>false</organismsDiffer>
    <experiments>3</experiments>
</comment>
<comment type="interaction">
    <interactant intactId="EBI-372273">
        <id>P20618</id>
    </interactant>
    <interactant intactId="EBI-372506">
        <id>Q8TAE8</id>
        <label>GADD45GIP1</label>
    </interactant>
    <organismsDiffer>false</organismsDiffer>
    <experiments>3</experiments>
</comment>
<comment type="interaction">
    <interactant intactId="EBI-372273">
        <id>P20618</id>
    </interactant>
    <interactant intactId="EBI-443648">
        <id>O14893</id>
        <label>GEMIN2</label>
    </interactant>
    <organismsDiffer>false</organismsDiffer>
    <experiments>3</experiments>
</comment>
<comment type="interaction">
    <interactant intactId="EBI-372273">
        <id>P20618</id>
    </interactant>
    <interactant intactId="EBI-356700">
        <id>P57678</id>
        <label>GEMIN4</label>
    </interactant>
    <organismsDiffer>false</organismsDiffer>
    <experiments>3</experiments>
</comment>
<comment type="interaction">
    <interactant intactId="EBI-372273">
        <id>P20618</id>
    </interactant>
    <interactant intactId="EBI-2349758">
        <id>Q86WP2</id>
        <label>GPBP1</label>
    </interactant>
    <organismsDiffer>false</organismsDiffer>
    <experiments>3</experiments>
</comment>
<comment type="interaction">
    <interactant intactId="EBI-372273">
        <id>P20618</id>
    </interactant>
    <interactant intactId="EBI-717919">
        <id>Q4V328</id>
        <label>GRIPAP1</label>
    </interactant>
    <organismsDiffer>false</organismsDiffer>
    <experiments>3</experiments>
</comment>
<comment type="interaction">
    <interactant intactId="EBI-372273">
        <id>P20618</id>
    </interactant>
    <interactant intactId="EBI-6115579">
        <id>Q9BX10</id>
        <label>GTPBP2</label>
    </interactant>
    <organismsDiffer>false</organismsDiffer>
    <experiments>3</experiments>
</comment>
<comment type="interaction">
    <interactant intactId="EBI-372273">
        <id>P20618</id>
    </interactant>
    <interactant intactId="EBI-740641">
        <id>Q9NP66</id>
        <label>HMG20A</label>
    </interactant>
    <organismsDiffer>false</organismsDiffer>
    <experiments>3</experiments>
</comment>
<comment type="interaction">
    <interactant intactId="EBI-372273">
        <id>P20618</id>
    </interactant>
    <interactant intactId="EBI-740785">
        <id>P49639</id>
        <label>HOXA1</label>
    </interactant>
    <organismsDiffer>false</organismsDiffer>
    <experiments>3</experiments>
</comment>
<comment type="interaction">
    <interactant intactId="EBI-372273">
        <id>P20618</id>
    </interactant>
    <interactant intactId="EBI-466029">
        <id>P42858</id>
        <label>HTT</label>
    </interactant>
    <organismsDiffer>false</organismsDiffer>
    <experiments>7</experiments>
</comment>
<comment type="interaction">
    <interactant intactId="EBI-372273">
        <id>P20618</id>
    </interactant>
    <interactant intactId="EBI-2857352">
        <id>Q9P2X3</id>
        <label>IMPACT</label>
    </interactant>
    <organismsDiffer>false</organismsDiffer>
    <experiments>3</experiments>
</comment>
<comment type="interaction">
    <interactant intactId="EBI-372273">
        <id>P20618</id>
    </interactant>
    <interactant intactId="EBI-2680803">
        <id>Q96N16</id>
        <label>JAKMIP1</label>
    </interactant>
    <organismsDiffer>false</organismsDiffer>
    <experiments>3</experiments>
</comment>
<comment type="interaction">
    <interactant intactId="EBI-372273">
        <id>P20618</id>
    </interactant>
    <interactant intactId="EBI-715394">
        <id>Q9H079</id>
        <label>KATNBL1</label>
    </interactant>
    <organismsDiffer>false</organismsDiffer>
    <experiments>5</experiments>
</comment>
<comment type="interaction">
    <interactant intactId="EBI-372273">
        <id>P20618</id>
    </interactant>
    <interactant intactId="EBI-9089060">
        <id>Q7Z7F0-4</id>
        <label>KHDC4</label>
    </interactant>
    <organismsDiffer>false</organismsDiffer>
    <experiments>3</experiments>
</comment>
<comment type="interaction">
    <interactant intactId="EBI-372273">
        <id>P20618</id>
    </interactant>
    <interactant intactId="EBI-2125614">
        <id>Q9BVG8</id>
        <label>KIFC3</label>
    </interactant>
    <organismsDiffer>false</organismsDiffer>
    <experiments>4</experiments>
</comment>
<comment type="interaction">
    <interactant intactId="EBI-372273">
        <id>P20618</id>
    </interactant>
    <interactant intactId="EBI-14069005">
        <id>Q9BVG8-5</id>
        <label>KIFC3</label>
    </interactant>
    <organismsDiffer>false</organismsDiffer>
    <experiments>3</experiments>
</comment>
<comment type="interaction">
    <interactant intactId="EBI-372273">
        <id>P20618</id>
    </interactant>
    <interactant intactId="EBI-10171552">
        <id>A1A4E9</id>
        <label>KRT13</label>
    </interactant>
    <organismsDiffer>false</organismsDiffer>
    <experiments>3</experiments>
</comment>
<comment type="interaction">
    <interactant intactId="EBI-372273">
        <id>P20618</id>
    </interactant>
    <interactant intactId="EBI-739566">
        <id>P19012</id>
        <label>KRT15</label>
    </interactant>
    <organismsDiffer>false</organismsDiffer>
    <experiments>7</experiments>
</comment>
<comment type="interaction">
    <interactant intactId="EBI-372273">
        <id>P20618</id>
    </interactant>
    <interactant intactId="EBI-948001">
        <id>Q15323</id>
        <label>KRT31</label>
    </interactant>
    <organismsDiffer>false</organismsDiffer>
    <experiments>3</experiments>
</comment>
<comment type="interaction">
    <interactant intactId="EBI-372273">
        <id>P20618</id>
    </interactant>
    <interactant intactId="EBI-1047093">
        <id>O76011</id>
        <label>KRT34</label>
    </interactant>
    <organismsDiffer>false</organismsDiffer>
    <experiments>3</experiments>
</comment>
<comment type="interaction">
    <interactant intactId="EBI-372273">
        <id>P20618</id>
    </interactant>
    <interactant intactId="EBI-11958506">
        <id>O76013-2</id>
        <label>KRT36</label>
    </interactant>
    <organismsDiffer>false</organismsDiffer>
    <experiments>3</experiments>
</comment>
<comment type="interaction">
    <interactant intactId="EBI-372273">
        <id>P20618</id>
    </interactant>
    <interactant intactId="EBI-10171697">
        <id>Q6A162</id>
        <label>KRT40</label>
    </interactant>
    <organismsDiffer>false</organismsDiffer>
    <experiments>3</experiments>
</comment>
<comment type="interaction">
    <interactant intactId="EBI-372273">
        <id>P20618</id>
    </interactant>
    <interactant intactId="EBI-11992140">
        <id>Q3LI76</id>
        <label>KRTAP15-1</label>
    </interactant>
    <organismsDiffer>false</organismsDiffer>
    <experiments>3</experiments>
</comment>
<comment type="interaction">
    <interactant intactId="EBI-372273">
        <id>P20618</id>
    </interactant>
    <interactant intactId="EBI-12811111">
        <id>Q8IUB9</id>
        <label>KRTAP19-1</label>
    </interactant>
    <organismsDiffer>false</organismsDiffer>
    <experiments>3</experiments>
</comment>
<comment type="interaction">
    <interactant intactId="EBI-372273">
        <id>P20618</id>
    </interactant>
    <interactant intactId="EBI-10241353">
        <id>Q3SYF9</id>
        <label>KRTAP19-7</label>
    </interactant>
    <organismsDiffer>false</organismsDiffer>
    <experiments>3</experiments>
</comment>
<comment type="interaction">
    <interactant intactId="EBI-372273">
        <id>P20618</id>
    </interactant>
    <interactant intactId="EBI-18394498">
        <id>Q8IUC3</id>
        <label>KRTAP7-1</label>
    </interactant>
    <organismsDiffer>false</organismsDiffer>
    <experiments>3</experiments>
</comment>
<comment type="interaction">
    <interactant intactId="EBI-372273">
        <id>P20618</id>
    </interactant>
    <interactant intactId="EBI-12224199">
        <id>Q5T751</id>
        <label>LCE1C</label>
    </interactant>
    <organismsDiffer>false</organismsDiffer>
    <experiments>3</experiments>
</comment>
<comment type="interaction">
    <interactant intactId="EBI-372273">
        <id>P20618</id>
    </interactant>
    <interactant intactId="EBI-11958008">
        <id>Q5T754</id>
        <label>LCE1F</label>
    </interactant>
    <organismsDiffer>false</organismsDiffer>
    <experiments>3</experiments>
</comment>
<comment type="interaction">
    <interactant intactId="EBI-372273">
        <id>P20618</id>
    </interactant>
    <interactant intactId="EBI-2865580">
        <id>O43679</id>
        <label>LDB2</label>
    </interactant>
    <organismsDiffer>false</organismsDiffer>
    <experiments>3</experiments>
</comment>
<comment type="interaction">
    <interactant intactId="EBI-372273">
        <id>P20618</id>
    </interactant>
    <interactant intactId="EBI-726510">
        <id>Q96BZ8</id>
        <label>LENG1</label>
    </interactant>
    <organismsDiffer>false</organismsDiffer>
    <experiments>3</experiments>
</comment>
<comment type="interaction">
    <interactant intactId="EBI-372273">
        <id>P20618</id>
    </interactant>
    <interactant intactId="EBI-12039345">
        <id>Q9UBR4-2</id>
        <label>LHX3</label>
    </interactant>
    <organismsDiffer>false</organismsDiffer>
    <experiments>3</experiments>
</comment>
<comment type="interaction">
    <interactant intactId="EBI-372273">
        <id>P20618</id>
    </interactant>
    <interactant intactId="EBI-821335">
        <id>Q9HAP6</id>
        <label>LIN7B</label>
    </interactant>
    <organismsDiffer>false</organismsDiffer>
    <experiments>3</experiments>
</comment>
<comment type="interaction">
    <interactant intactId="EBI-372273">
        <id>P20618</id>
    </interactant>
    <interactant intactId="EBI-8639312">
        <id>P25800</id>
        <label>LMO1</label>
    </interactant>
    <organismsDiffer>false</organismsDiffer>
    <experiments>3</experiments>
</comment>
<comment type="interaction">
    <interactant intactId="EBI-372273">
        <id>P20618</id>
    </interactant>
    <interactant intactId="EBI-2824799">
        <id>Q9NQ48</id>
        <label>LZTFL1</label>
    </interactant>
    <organismsDiffer>false</organismsDiffer>
    <experiments>3</experiments>
</comment>
<comment type="interaction">
    <interactant intactId="EBI-372273">
        <id>P20618</id>
    </interactant>
    <interactant intactId="EBI-726739">
        <id>Q9UPY8</id>
        <label>MAPRE3</label>
    </interactant>
    <organismsDiffer>false</organismsDiffer>
    <experiments>3</experiments>
</comment>
<comment type="interaction">
    <interactant intactId="EBI-372273">
        <id>P20618</id>
    </interactant>
    <interactant intactId="EBI-2340269">
        <id>Q13064</id>
        <label>MKRN3</label>
    </interactant>
    <organismsDiffer>false</organismsDiffer>
    <experiments>3</experiments>
</comment>
<comment type="interaction">
    <interactant intactId="EBI-372273">
        <id>P20618</id>
    </interactant>
    <interactant intactId="EBI-19046912">
        <id>Q8NB16-2</id>
        <label>MLKL</label>
    </interactant>
    <organismsDiffer>false</organismsDiffer>
    <experiments>3</experiments>
</comment>
<comment type="interaction">
    <interactant intactId="EBI-372273">
        <id>P20618</id>
    </interactant>
    <interactant intactId="EBI-2857471">
        <id>Q6NTE8</id>
        <label>MRNIP</label>
    </interactant>
    <organismsDiffer>false</organismsDiffer>
    <experiments>3</experiments>
</comment>
<comment type="interaction">
    <interactant intactId="EBI-372273">
        <id>P20618</id>
    </interactant>
    <interactant intactId="EBI-11522433">
        <id>Q5JR59-3</id>
        <label>MTUS2</label>
    </interactant>
    <organismsDiffer>false</organismsDiffer>
    <experiments>3</experiments>
</comment>
<comment type="interaction">
    <interactant intactId="EBI-372273">
        <id>P20618</id>
    </interactant>
    <interactant intactId="EBI-18012223">
        <id>P60323-2</id>
        <label>NANOS3</label>
    </interactant>
    <organismsDiffer>false</organismsDiffer>
    <experiments>3</experiments>
</comment>
<comment type="interaction">
    <interactant intactId="EBI-372273">
        <id>P20618</id>
    </interactant>
    <interactant intactId="EBI-748312">
        <id>P49821</id>
        <label>NDUFV1</label>
    </interactant>
    <organismsDiffer>false</organismsDiffer>
    <experiments>3</experiments>
</comment>
<comment type="interaction">
    <interactant intactId="EBI-372273">
        <id>P20618</id>
    </interactant>
    <interactant intactId="EBI-744871">
        <id>O00746</id>
        <label>NME4</label>
    </interactant>
    <organismsDiffer>false</organismsDiffer>
    <experiments>3</experiments>
</comment>
<comment type="interaction">
    <interactant intactId="EBI-372273">
        <id>P20618</id>
    </interactant>
    <interactant intactId="EBI-536879">
        <id>O43482</id>
        <label>OIP5</label>
    </interactant>
    <organismsDiffer>false</organismsDiffer>
    <experiments>3</experiments>
</comment>
<comment type="interaction">
    <interactant intactId="EBI-372273">
        <id>P20618</id>
    </interactant>
    <interactant intactId="EBI-527784">
        <id>Q6GQQ9</id>
        <label>OTUD7B</label>
    </interactant>
    <organismsDiffer>false</organismsDiffer>
    <experiments>3</experiments>
</comment>
<comment type="interaction">
    <interactant intactId="EBI-372273">
        <id>P20618</id>
    </interactant>
    <interactant intactId="EBI-11532361">
        <id>P78356-2</id>
        <label>PIP4K2B</label>
    </interactant>
    <organismsDiffer>false</organismsDiffer>
    <experiments>3</experiments>
</comment>
<comment type="interaction">
    <interactant intactId="EBI-372273">
        <id>P20618</id>
    </interactant>
    <interactant intactId="EBI-949255">
        <id>Q58EX7</id>
        <label>PLEKHG4</label>
    </interactant>
    <organismsDiffer>false</organismsDiffer>
    <experiments>3</experiments>
</comment>
<comment type="interaction">
    <interactant intactId="EBI-372273">
        <id>P20618</id>
    </interactant>
    <interactant intactId="EBI-696895">
        <id>Q9Y244</id>
        <label>POMP</label>
    </interactant>
    <organismsDiffer>false</organismsDiffer>
    <experiments>6</experiments>
</comment>
<comment type="interaction">
    <interactant intactId="EBI-372273">
        <id>P20618</id>
    </interactant>
    <interactant intactId="EBI-359352">
        <id>P25786</id>
        <label>PSMA1</label>
    </interactant>
    <organismsDiffer>false</organismsDiffer>
    <experiments>16</experiments>
</comment>
<comment type="interaction">
    <interactant intactId="EBI-372273">
        <id>P20618</id>
    </interactant>
    <interactant intactId="EBI-359335">
        <id>P49721</id>
        <label>PSMB2</label>
    </interactant>
    <organismsDiffer>false</organismsDiffer>
    <experiments>8</experiments>
</comment>
<comment type="interaction">
    <interactant intactId="EBI-372273">
        <id>P20618</id>
    </interactant>
    <interactant intactId="EBI-603340">
        <id>P49720</id>
        <label>PSMB3</label>
    </interactant>
    <organismsDiffer>false</organismsDiffer>
    <experiments>6</experiments>
</comment>
<comment type="interaction">
    <interactant intactId="EBI-372273">
        <id>P20618</id>
    </interactant>
    <interactant intactId="EBI-603350">
        <id>P28070</id>
        <label>PSMB4</label>
    </interactant>
    <organismsDiffer>false</organismsDiffer>
    <experiments>9</experiments>
</comment>
<comment type="interaction">
    <interactant intactId="EBI-372273">
        <id>P20618</id>
    </interactant>
    <interactant intactId="EBI-357828">
        <id>P28074</id>
        <label>PSMB5</label>
    </interactant>
    <organismsDiffer>false</organismsDiffer>
    <experiments>7</experiments>
</comment>
<comment type="interaction">
    <interactant intactId="EBI-372273">
        <id>P20618</id>
    </interactant>
    <interactant intactId="EBI-603319">
        <id>Q99436</id>
        <label>PSMB7</label>
    </interactant>
    <organismsDiffer>false</organismsDiffer>
    <experiments>13</experiments>
</comment>
<comment type="interaction">
    <interactant intactId="EBI-372273">
        <id>P20618</id>
    </interactant>
    <interactant intactId="EBI-359318">
        <id>P55036</id>
        <label>PSMD4</label>
    </interactant>
    <organismsDiffer>false</organismsDiffer>
    <experiments>3</experiments>
</comment>
<comment type="interaction">
    <interactant intactId="EBI-372273">
        <id>P20618</id>
    </interactant>
    <interactant intactId="EBI-2959680">
        <id>Q53H96</id>
        <label>PYCR3</label>
    </interactant>
    <organismsDiffer>false</organismsDiffer>
    <experiments>3</experiments>
</comment>
<comment type="interaction">
    <interactant intactId="EBI-372273">
        <id>P20618</id>
    </interactant>
    <interactant intactId="EBI-12092053">
        <id>P57055</id>
        <label>RIPPLY3</label>
    </interactant>
    <organismsDiffer>false</organismsDiffer>
    <experiments>3</experiments>
</comment>
<comment type="interaction">
    <interactant intactId="EBI-372273">
        <id>P20618</id>
    </interactant>
    <interactant intactId="EBI-373337">
        <id>O76064</id>
        <label>RNF8</label>
    </interactant>
    <organismsDiffer>false</organismsDiffer>
    <experiments>3</experiments>
</comment>
<comment type="interaction">
    <interactant intactId="EBI-372273">
        <id>P20618</id>
    </interactant>
    <interactant intactId="EBI-747925">
        <id>Q9NQG5</id>
        <label>RPRD1B</label>
    </interactant>
    <organismsDiffer>false</organismsDiffer>
    <experiments>3</experiments>
</comment>
<comment type="interaction">
    <interactant intactId="EBI-372273">
        <id>P20618</id>
    </interactant>
    <interactant intactId="EBI-17677006">
        <id>Q9UIY3</id>
        <label>RWDD2A</label>
    </interactant>
    <organismsDiffer>false</organismsDiffer>
    <experiments>3</experiments>
</comment>
<comment type="interaction">
    <interactant intactId="EBI-372273">
        <id>P20618</id>
    </interactant>
    <interactant intactId="EBI-752324">
        <id>Q8N488</id>
        <label>RYBP</label>
    </interactant>
    <organismsDiffer>false</organismsDiffer>
    <experiments>3</experiments>
</comment>
<comment type="interaction">
    <interactant intactId="EBI-372273">
        <id>P20618</id>
    </interactant>
    <interactant intactId="EBI-12823227">
        <id>Q6ZMJ2-2</id>
        <label>SCARA5</label>
    </interactant>
    <organismsDiffer>false</organismsDiffer>
    <experiments>3</experiments>
</comment>
<comment type="interaction">
    <interactant intactId="EBI-372273">
        <id>P20618</id>
    </interactant>
    <interactant intactId="EBI-697911">
        <id>Q99961</id>
        <label>SH3GL1</label>
    </interactant>
    <organismsDiffer>false</organismsDiffer>
    <experiments>3</experiments>
</comment>
<comment type="interaction">
    <interactant intactId="EBI-372273">
        <id>P20618</id>
    </interactant>
    <interactant intactId="EBI-347161">
        <id>P84022</id>
        <label>SMAD3</label>
    </interactant>
    <organismsDiffer>false</organismsDiffer>
    <experiments>3</experiments>
</comment>
<comment type="interaction">
    <interactant intactId="EBI-372273">
        <id>P20618</id>
    </interactant>
    <interactant intactId="EBI-358436">
        <id>Q12824-2</id>
        <label>SMARCB1</label>
    </interactant>
    <organismsDiffer>false</organismsDiffer>
    <experiments>3</experiments>
</comment>
<comment type="interaction">
    <interactant intactId="EBI-372273">
        <id>P20618</id>
    </interactant>
    <interactant intactId="EBI-714194">
        <id>Q93045</id>
        <label>STMN2</label>
    </interactant>
    <organismsDiffer>false</organismsDiffer>
    <experiments>3</experiments>
</comment>
<comment type="interaction">
    <interactant intactId="EBI-372273">
        <id>P20618</id>
    </interactant>
    <interactant intactId="EBI-1245626">
        <id>P0C1Z6</id>
        <label>TFPT</label>
    </interactant>
    <organismsDiffer>false</organismsDiffer>
    <experiments>3</experiments>
</comment>
<comment type="interaction">
    <interactant intactId="EBI-372273">
        <id>P20618</id>
    </interactant>
    <interactant intactId="EBI-3925505">
        <id>Q8TBB0</id>
        <label>THAP6</label>
    </interactant>
    <organismsDiffer>false</organismsDiffer>
    <experiments>3</experiments>
</comment>
<comment type="interaction">
    <interactant intactId="EBI-372273">
        <id>P20618</id>
    </interactant>
    <interactant intactId="EBI-11741437">
        <id>Q08117-2</id>
        <label>TLE5</label>
    </interactant>
    <organismsDiffer>false</organismsDiffer>
    <experiments>3</experiments>
</comment>
<comment type="interaction">
    <interactant intactId="EBI-372273">
        <id>P20618</id>
    </interactant>
    <interactant intactId="EBI-74615">
        <id>Q9H0E2</id>
        <label>TOLLIP</label>
    </interactant>
    <organismsDiffer>false</organismsDiffer>
    <experiments>3</experiments>
</comment>
<comment type="interaction">
    <interactant intactId="EBI-372273">
        <id>P20618</id>
    </interactant>
    <interactant intactId="EBI-359224">
        <id>Q13077</id>
        <label>TRAF1</label>
    </interactant>
    <organismsDiffer>false</organismsDiffer>
    <experiments>7</experiments>
</comment>
<comment type="interaction">
    <interactant intactId="EBI-372273">
        <id>P20618</id>
    </interactant>
    <interactant intactId="EBI-355744">
        <id>Q12933</id>
        <label>TRAF2</label>
    </interactant>
    <organismsDiffer>false</organismsDiffer>
    <experiments>5</experiments>
</comment>
<comment type="interaction">
    <interactant intactId="EBI-372273">
        <id>P20618</id>
    </interactant>
    <interactant intactId="EBI-740098">
        <id>P36406</id>
        <label>TRIM23</label>
    </interactant>
    <organismsDiffer>false</organismsDiffer>
    <experiments>3</experiments>
</comment>
<comment type="interaction">
    <interactant intactId="EBI-372273">
        <id>P20618</id>
    </interactant>
    <interactant intactId="EBI-719493">
        <id>P14373</id>
        <label>TRIM27</label>
    </interactant>
    <organismsDiffer>false</organismsDiffer>
    <experiments>8</experiments>
</comment>
<comment type="interaction">
    <interactant intactId="EBI-372273">
        <id>P20618</id>
    </interactant>
    <interactant intactId="EBI-11523450">
        <id>Q9HCM9-2</id>
        <label>TRIM39</label>
    </interactant>
    <organismsDiffer>false</organismsDiffer>
    <experiments>3</experiments>
</comment>
<comment type="interaction">
    <interactant intactId="EBI-372273">
        <id>P20618</id>
    </interactant>
    <interactant intactId="EBI-2555404">
        <id>Q6PID6</id>
        <label>TTC33</label>
    </interactant>
    <organismsDiffer>false</organismsDiffer>
    <experiments>3</experiments>
</comment>
<comment type="interaction">
    <interactant intactId="EBI-372273">
        <id>P20618</id>
    </interactant>
    <interactant intactId="EBI-1380492">
        <id>Q8TF42</id>
        <label>UBASH3B</label>
    </interactant>
    <organismsDiffer>false</organismsDiffer>
    <experiments>3</experiments>
</comment>
<comment type="interaction">
    <interactant intactId="EBI-372273">
        <id>P20618</id>
    </interactant>
    <interactant intactId="EBI-12227803">
        <id>Q5SQQ9-2</id>
        <label>VAX1</label>
    </interactant>
    <organismsDiffer>false</organismsDiffer>
    <experiments>3</experiments>
</comment>
<comment type="interaction">
    <interactant intactId="EBI-372273">
        <id>P20618</id>
    </interactant>
    <interactant intactId="EBI-720609">
        <id>O76024</id>
        <label>WFS1</label>
    </interactant>
    <organismsDiffer>false</organismsDiffer>
    <experiments>3</experiments>
</comment>
<comment type="interaction">
    <interactant intactId="EBI-372273">
        <id>P20618</id>
    </interactant>
    <interactant intactId="EBI-295222">
        <id>P23025</id>
        <label>XPA</label>
    </interactant>
    <organismsDiffer>false</organismsDiffer>
    <experiments>3</experiments>
</comment>
<comment type="interaction">
    <interactant intactId="EBI-372273">
        <id>P20618</id>
    </interactant>
    <interactant intactId="EBI-10188476">
        <id>A0A0C4DGF1</id>
        <label>ZBTB32</label>
    </interactant>
    <organismsDiffer>false</organismsDiffer>
    <experiments>3</experiments>
</comment>
<comment type="interaction">
    <interactant intactId="EBI-372273">
        <id>P20618</id>
    </interactant>
    <interactant intactId="EBI-12272076">
        <id>Q13360-2</id>
        <label>ZNF177</label>
    </interactant>
    <organismsDiffer>false</organismsDiffer>
    <experiments>3</experiments>
</comment>
<comment type="interaction">
    <interactant intactId="EBI-372273">
        <id>P20618</id>
    </interactant>
    <interactant intactId="EBI-11962468">
        <id>Q7Z4V0</id>
        <label>ZNF438</label>
    </interactant>
    <organismsDiffer>false</organismsDiffer>
    <experiments>3</experiments>
</comment>
<comment type="interaction">
    <interactant intactId="EBI-372273">
        <id>P20618</id>
    </interactant>
    <interactant intactId="EBI-4395732">
        <id>P0C7X2</id>
        <label>ZNF688</label>
    </interactant>
    <organismsDiffer>false</organismsDiffer>
    <experiments>3</experiments>
</comment>
<comment type="interaction">
    <interactant intactId="EBI-372273">
        <id>P20618</id>
    </interactant>
    <interactant intactId="EBI-10251462">
        <id>Q6NX45</id>
        <label>ZNF774</label>
    </interactant>
    <organismsDiffer>false</organismsDiffer>
    <experiments>3</experiments>
</comment>
<comment type="subcellular location">
    <subcellularLocation>
        <location evidence="4 17">Cytoplasm</location>
    </subcellularLocation>
    <subcellularLocation>
        <location evidence="4 17">Nucleus</location>
    </subcellularLocation>
    <text evidence="17">Translocated from the cytoplasm into the nucleus following interaction with AKIRIN2, which bridges the proteasome with the nuclear import receptor IPO9.</text>
</comment>
<comment type="disease" evidence="16">
    <disease id="DI-06505">
        <name>Neurodevelopmental disorder with microcephaly, hypotonia, and absent language</name>
        <acronym>NEDMHAL</acronym>
        <description>An autosomal recessive disorder characterized by microcephaly, intellectual disability with absent speech, severe developmental delay, short stature, and hypotonia. Affected individuals also manifest aggressive behavior and have hearing loss.</description>
        <dbReference type="MIM" id="620038"/>
    </disease>
    <text>The disease may be caused by variants affecting the gene represented in this entry.</text>
</comment>
<comment type="similarity">
    <text evidence="3">Belongs to the peptidase T1B family.</text>
</comment>
<gene>
    <name evidence="21" type="primary">PSMB1</name>
    <name type="synonym">PSC5</name>
</gene>